<comment type="function">
    <text evidence="2 7 8 11 13">Direct ligand for ERBB3 and ERBB4 tyrosine kinase receptors. Concomitantly recruits ERBB1 and ERBB2 coreceptors, resulting in ligand-stimulated tyrosine phosphorylation and activation of the ERBB receptors. The multiple isoforms perform diverse functions such as inducing growth and differentiation of epithelial, glial, neuronal, and skeletal muscle cells; inducing expression of acetylcholine receptor in synaptic vesicles during the formation of the neuromuscular junction; stimulating lobuloalveolar budding and milk production in the mammary gland and inducing differentiation of mammary tumor cells; stimulating Schwann cell proliferation; implication in the development of the myocardium such as trabeculation of the developing heart. Isoform 10 may play a role in motor and sensory neuron development. Binds to ERBB4 (PubMed:10867024, PubMed:7902537). Binds to ERBB3 (PubMed:20682778). Acts as a ligand for integrins and binds (via EGF domain) to integrins ITGAV:ITGB3 or ITGA6:ITGB4. Its binding to integrins and subsequent ternary complex formation with integrins and ERRB3 are essential for NRG1-ERBB signaling. Induces the phosphorylation and activation of MAPK3/ERK1, MAPK1/ERK2 and AKT1 (PubMed:20682778). Ligand-dependent ERBB4 endocytosis is essential for the NRG1-mediated activation of these kinases in neurons (By similarity).</text>
</comment>
<comment type="subunit">
    <text evidence="2 3 11">The cytoplasmic domain interacts with the LIM domain region of LIMK1 (By similarity). Forms a ternary complex with ERBB3 and ITGAV:ITGB3 or ITGA6:ITGB4 (PubMed:20682778). Interacts with NRDC and BACE1 (By similarity).</text>
</comment>
<comment type="interaction">
    <interactant intactId="EBI-15651799">
        <id>Q02297-6</id>
    </interactant>
    <interactant intactId="EBI-720706">
        <id>P21860</id>
        <label>ERBB3</label>
    </interactant>
    <organismsDiffer>false</organismsDiffer>
    <experiments>2</experiments>
</comment>
<comment type="interaction">
    <interactant intactId="EBI-15651799">
        <id>Q02297-6</id>
    </interactant>
    <interactant intactId="EBI-80371">
        <id>Q15303</id>
        <label>ERBB4</label>
    </interactant>
    <organismsDiffer>false</organismsDiffer>
    <experiments>3</experiments>
</comment>
<comment type="interaction">
    <interactant intactId="EBI-2460927">
        <id>Q02297-7</id>
    </interactant>
    <interactant intactId="EBI-641062">
        <id>P04626</id>
        <label>ERBB2</label>
    </interactant>
    <organismsDiffer>false</organismsDiffer>
    <experiments>2</experiments>
</comment>
<comment type="interaction">
    <interactant intactId="EBI-2460927">
        <id>Q02297-7</id>
    </interactant>
    <interactant intactId="EBI-720706">
        <id>P21860</id>
        <label>ERBB3</label>
    </interactant>
    <organismsDiffer>false</organismsDiffer>
    <experiments>3</experiments>
</comment>
<comment type="interaction">
    <interactant intactId="EBI-12842334">
        <id>Q02297-10</id>
    </interactant>
    <interactant intactId="EBI-12808270">
        <id>P07307-3</id>
        <label>ASGR2</label>
    </interactant>
    <organismsDiffer>false</organismsDiffer>
    <experiments>3</experiments>
</comment>
<comment type="interaction">
    <interactant intactId="EBI-12842334">
        <id>Q02297-10</id>
    </interactant>
    <interactant intactId="EBI-307924">
        <id>P21854</id>
        <label>CD72</label>
    </interactant>
    <organismsDiffer>false</organismsDiffer>
    <experiments>3</experiments>
</comment>
<comment type="interaction">
    <interactant intactId="EBI-12842334">
        <id>Q02297-10</id>
    </interactant>
    <interactant intactId="EBI-10266796">
        <id>Q8N5M9</id>
        <label>JAGN1</label>
    </interactant>
    <organismsDiffer>false</organismsDiffer>
    <experiments>3</experiments>
</comment>
<comment type="interaction">
    <interactant intactId="EBI-12842334">
        <id>Q02297-10</id>
    </interactant>
    <interactant intactId="EBI-3267258">
        <id>Q86VI4</id>
        <label>LAPTM4B</label>
    </interactant>
    <organismsDiffer>false</organismsDiffer>
    <experiments>3</experiments>
</comment>
<comment type="interaction">
    <interactant intactId="EBI-12842334">
        <id>Q02297-10</id>
    </interactant>
    <interactant intactId="EBI-12820341">
        <id>Q96JQ5</id>
        <label>MS4A4A</label>
    </interactant>
    <organismsDiffer>false</organismsDiffer>
    <experiments>3</experiments>
</comment>
<comment type="interaction">
    <interactant intactId="EBI-12842334">
        <id>Q02297-10</id>
    </interactant>
    <interactant intactId="EBI-12188331">
        <id>P60201-2</id>
        <label>PLP1</label>
    </interactant>
    <organismsDiffer>false</organismsDiffer>
    <experiments>3</experiments>
</comment>
<comment type="interaction">
    <interactant intactId="EBI-12842334">
        <id>Q02297-10</id>
    </interactant>
    <interactant intactId="EBI-3922833">
        <id>Q969K7</id>
        <label>TMEM54</label>
    </interactant>
    <organismsDiffer>false</organismsDiffer>
    <experiments>3</experiments>
</comment>
<comment type="subcellular location">
    <molecule>Pro-neuregulin-1, membrane-bound isoform</molecule>
    <subcellularLocation>
        <location>Cell membrane</location>
        <topology>Single-pass type I membrane protein</topology>
    </subcellularLocation>
    <text>Does not seem to be active.</text>
</comment>
<comment type="subcellular location">
    <molecule>Neuregulin-1</molecule>
    <subcellularLocation>
        <location>Secreted</location>
    </subcellularLocation>
</comment>
<comment type="subcellular location">
    <molecule>Isoform 8</molecule>
    <subcellularLocation>
        <location>Nucleus</location>
    </subcellularLocation>
    <text>May be nuclear.</text>
</comment>
<comment type="subcellular location">
    <molecule>Isoform 9</molecule>
    <subcellularLocation>
        <location>Secreted</location>
    </subcellularLocation>
    <text>Has a signal peptide.</text>
</comment>
<comment type="subcellular location">
    <molecule>Isoform 10</molecule>
    <subcellularLocation>
        <location>Membrane</location>
        <topology>Single-pass type I membrane protein</topology>
    </subcellularLocation>
    <text>May possess an internal uncleaved signal sequence.</text>
</comment>
<comment type="alternative products">
    <event type="alternative splicing"/>
    <isoform>
        <id>Q02297-1</id>
        <name>1</name>
        <name>Alpha</name>
        <sequence type="displayed"/>
    </isoform>
    <isoform>
        <id>Q02297-2</id>
        <name>2</name>
        <name>Alpha1A</name>
        <sequence type="described" ref="VSP_003431"/>
    </isoform>
    <isoform>
        <id>Q02297-3</id>
        <name>3</name>
        <name>Alpha2B</name>
        <sequence type="described" ref="VSP_003434 VSP_003435"/>
    </isoform>
    <isoform>
        <id>Q02297-4</id>
        <name>4</name>
        <name>Alpha3</name>
        <sequence type="described" ref="VSP_003432 VSP_003433"/>
    </isoform>
    <isoform>
        <id>Q02297-6</id>
        <name>6</name>
        <name>Beta1</name>
        <name>Beta1A</name>
        <sequence type="described" ref="VSP_003428"/>
    </isoform>
    <isoform>
        <id>Q02297-7</id>
        <name>7</name>
        <name>Beta2</name>
        <sequence type="described" ref="VSP_003427"/>
    </isoform>
    <isoform>
        <id>Q02297-8</id>
        <name>8</name>
        <name>Beta3</name>
        <name>GGFHFB1</name>
        <sequence type="described" ref="VSP_003429 VSP_003430"/>
    </isoform>
    <isoform>
        <id>Q02297-9</id>
        <name>9</name>
        <name>GGF2</name>
        <name>GGFHPP2</name>
        <sequence type="described" ref="VSP_003425 VSP_003426 VSP_003429 VSP_003430"/>
    </isoform>
    <isoform>
        <id>Q02297-10</id>
        <name>10</name>
        <name>SMDF</name>
        <sequence type="described" ref="VSP_037562 VSP_037565 VSP_003429 VSP_003430"/>
    </isoform>
    <isoform>
        <id>Q02297-11</id>
        <name>11</name>
        <name>Type IV-beta1a</name>
        <sequence type="described" ref="VSP_037563 VSP_037564 VSP_003426 VSP_003428"/>
    </isoform>
    <isoform>
        <id>Q02297-12</id>
        <name>12</name>
        <sequence type="described" ref="VSP_003427 VSP_046417"/>
    </isoform>
    <text>Additional isoforms seem to exist. Isoforms have been classified as type I NRGs (isoforms with an Ig domain and a glycosylation domain, isoforms 1-8), type II NRGs (isoforms with an Ig domain but no glycosylation domain, isoform 9), type III NRGs (isoforms with a Cys-rich domain, isoform 10) and type IV NRGs (isoforms with additional 5' exons, isoform 11). All these isoforms perform distinct tissue-specific functions.</text>
</comment>
<comment type="tissue specificity">
    <text evidence="10">Type I isoforms are the predominant forms expressed in the endocardium. Isoform alpha is expressed in breast, ovary, testis, prostate, heart, skeletal muscle, lung, placenta liver, kidney, salivary gland, small intestine and brain, but not in uterus, stomach, pancreas, and spleen. Isoform 3 is the predominant form in mesenchymal cells and in non-neuronal organs, whereas isoform 6 is the major neuronal form. Isoform 8 is expressed in spinal cord and brain. Isoform 9 is the major form in skeletal muscle cells; in the nervous system it is expressed in spinal cord and brain. Also detected in adult heart, placenta, lung, liver, kidney, and pancreas. Isoform 10 is expressed in nervous system: spinal cord motor neurons, dorsal root ganglion neurons, and brain. Predominant isoform expressed in sensory and motor neurons. Not detected in adult heart, placenta, lung, liver, skeletal muscle, kidney, and pancreas. Not expressed in fetal lung, liver and kidney. Type IV isoforms are brain-specific.</text>
</comment>
<comment type="developmental stage">
    <text evidence="10">Detectable at early embryonic ages. Isoform 10 is highly expressed in developing spinal motor neurons and in developing cranial nerve nuclei. Expression is maintained only in both adult motor neurons and dorsal root ganglion neurons. Type IV isoforms are expressed in fetal brain.</text>
</comment>
<comment type="domain">
    <text evidence="1">The cytoplasmic domain may be involved in the regulation of trafficking and proteolytic processing. Regulation of the proteolytic processing involves initial intracellular domain dimerization (By similarity).</text>
</comment>
<comment type="domain">
    <text>ERBB receptor binding is elicited entirely by the EGF-like domain.</text>
</comment>
<comment type="PTM">
    <text>Proteolytic cleavage close to the plasma membrane on the external face leads to the release of the soluble growth factor form.</text>
</comment>
<comment type="PTM">
    <text evidence="1">N- and O-glycosylated. Extensive glycosylation precedes the proteolytic cleavage (By similarity).</text>
</comment>
<comment type="disease">
    <text>A chromosomal aberration involving NRG1 produces gamma-heregulin. Translocation t(8;11) with TENM4. The translocation fuses the 5'-end of TENM4 to NRG1 (isoform 8). The product of this translocation was first thought to be an alternatively spliced isoform. Gamma-heregulin is a soluble activating ligand for the ERBB2-ERBB3 receptor complex and acts as an autocrine growth factor in a specific breast cancer cell line (MDA-MB-175). Not detected in breast carcinoma samples, including ductal, lobular, medullary, and mucinous histological types, neither in other breast cancer cell lines.</text>
</comment>
<comment type="miscellaneous">
    <molecule>Isoform 10</molecule>
    <text evidence="22">Potential internal signal sequence at positions 76-100.</text>
</comment>
<comment type="similarity">
    <text evidence="22">Belongs to the neuregulin family.</text>
</comment>
<comment type="sequence caution" evidence="22">
    <conflict type="miscellaneous discrepancy">
        <sequence resource="EMBL-CDS" id="AAA19955"/>
    </conflict>
    <text>Contaminating sequence. Sequence of unknown origin in the N-terminal part.</text>
</comment>
<comment type="sequence caution" evidence="22">
    <conflict type="erroneous initiation">
        <sequence resource="EMBL-CDS" id="AAC51756"/>
    </conflict>
</comment>
<comment type="online information" name="Protein Spotlight">
    <link uri="https://www.proteinspotlight.org/back_issues/129"/>
    <text>Tipping the mind - Issue 129 of June 2011</text>
</comment>
<sequence length="640" mass="70392">MSERKEGRGKGKGKKKERGSGKKPESAAGSQSPALPPRLKEMKSQESAAGSKLVLRCETSSEYSSLRFKWFKNGNELNRKNKPQNIKIQKKPGKSELRINKASLADSGEYMCKVISKLGNDSASANITIVESNEIITGMPASTEGAYVSSESPIRISVSTEGANTSSSTSTSTTGTSHLVKCAEKEKTFCVNGGECFMVKDLSNPSRYLCKCQPGFTGARCTENVPMKVQNQEKAEELYQKRVLTITGICIALLVVGIMCVVAYCKTKKQRKKLHDRLRQSLRSERNNMMNIANGPHHPNPPPENVQLVNQYVSKNVISSEHIVEREAETSFSTSHYTSTAHHSTTVTQTPSHSWSNGHTESILSESHSVIVMSSVENSRHSSPTGGPRGRLNGTGGPRECNSFLRHARETPDSYRDSPHSERYVSAMTTPARMSPVDFHTPSSPKSPPSEMSPPVSSMTVSMPSMAVSPFMEEERPLLLVTPPRLREKKFDHHPQQFSSFHHNPAHDSNSLPASPLRIVEDEEYETTQEYEPAQEPVKKLANSRRAKRTKPNGHIANRLEVDSNTSSQSSNSESETEDERVGEDTPFLGIQNPLAASLEATPAFRLADSRTNPAGRFSTQEEIQARLSSVIANQDPIAV</sequence>
<reference key="1">
    <citation type="journal article" date="1992" name="Science">
        <title>Identification of heregulin, a specific activator of p185erbB2.</title>
        <authorList>
            <person name="Holmes W.E."/>
            <person name="Sliwkowski M.X."/>
            <person name="Akita R.W."/>
            <person name="Henzel W.J."/>
            <person name="Lee J."/>
            <person name="Park J.W."/>
            <person name="Yansura D."/>
            <person name="Abadi N."/>
            <person name="Raab H."/>
            <person name="Lewis G.D."/>
            <person name="Shepard H.M."/>
            <person name="Kuang W.-J."/>
            <person name="Wood W.I."/>
            <person name="Goeddel D.V."/>
            <person name="Vandlen R.L."/>
        </authorList>
    </citation>
    <scope>NUCLEOTIDE SEQUENCE [MRNA] (ISOFORMS 1; 6; 7 AND 8)</scope>
    <scope>PARTIAL PROTEIN SEQUENCE</scope>
</reference>
<reference key="2">
    <citation type="journal article" date="1994" name="Mol. Cell. Biol.">
        <title>Structural and functional aspects of the multiplicity of Neu differentiation factors.</title>
        <authorList>
            <person name="Wen D."/>
            <person name="Suggs S.V."/>
            <person name="Karunagaran D."/>
            <person name="Liu N."/>
            <person name="Cupples R.L."/>
            <person name="Luo Y."/>
            <person name="Janssen A.M."/>
            <person name="Ben-Baruch N."/>
            <person name="Trollinger D.B."/>
            <person name="Jacobsen V.L."/>
            <person name="Meng S.-Y."/>
            <person name="Lu H.S."/>
            <person name="Hu S."/>
            <person name="Chang D."/>
            <person name="Yang W."/>
            <person name="Yanigahara D."/>
            <person name="Koski R.A."/>
            <person name="Yarden Y."/>
        </authorList>
    </citation>
    <scope>NUCLEOTIDE SEQUENCE [MRNA] (ISOFORMS 2; 3; 4; 6; 7 AND 8)</scope>
    <source>
        <tissue>Kidney adenocarcinoma</tissue>
        <tissue>Pituitary</tissue>
    </source>
</reference>
<reference key="3">
    <citation type="journal article" date="1993" name="Nature">
        <title>Glial growth factors are alternatively spliced erbB2 ligands expressed in the nervous system.</title>
        <authorList>
            <person name="Marchionni M.A."/>
            <person name="Goodearl A.D.J."/>
            <person name="Chen M.S."/>
            <person name="Bermingham-McDonogh O."/>
            <person name="Kirk C."/>
            <person name="Hendricks M."/>
            <person name="Danehy F."/>
            <person name="Misumi D."/>
            <person name="Sudhalter J."/>
            <person name="Kobayashi K."/>
            <person name="Wroblewski D."/>
            <person name="Lynch C."/>
            <person name="Baldasarre M."/>
            <person name="Hiles I."/>
            <person name="Davis J.B."/>
            <person name="Hsuan J.J."/>
            <person name="Totty N.F."/>
            <person name="Otsu M."/>
            <person name="McBurney R.N."/>
            <person name="Waterfield M.D."/>
            <person name="Stroobant P."/>
            <person name="Gwynne D."/>
        </authorList>
    </citation>
    <scope>NUCLEOTIDE SEQUENCE [MRNA] (ISOFORMS 8 AND 9)</scope>
    <source>
        <tissue>Brain</tissue>
    </source>
</reference>
<reference key="4">
    <citation type="journal article" date="1995" name="J. Biol. Chem.">
        <title>Sensory and motor neuron-derived factor. A novel heregulin variant highly expressed in sensory and motor neurons.</title>
        <authorList>
            <person name="Ho W.-H."/>
            <person name="Armanini M.P."/>
            <person name="Nuijens A."/>
            <person name="Phillips H.S."/>
            <person name="Osheroff P.L."/>
        </authorList>
    </citation>
    <scope>NUCLEOTIDE SEQUENCE [MRNA] (ISOFORM 10)</scope>
    <source>
        <tissue>Brain stem</tissue>
        <tissue>Cerebellum</tissue>
    </source>
</reference>
<reference key="5">
    <citation type="journal article" date="2004" name="Nat. Genet.">
        <title>Complete sequencing and characterization of 21,243 full-length human cDNAs.</title>
        <authorList>
            <person name="Ota T."/>
            <person name="Suzuki Y."/>
            <person name="Nishikawa T."/>
            <person name="Otsuki T."/>
            <person name="Sugiyama T."/>
            <person name="Irie R."/>
            <person name="Wakamatsu A."/>
            <person name="Hayashi K."/>
            <person name="Sato H."/>
            <person name="Nagai K."/>
            <person name="Kimura K."/>
            <person name="Makita H."/>
            <person name="Sekine M."/>
            <person name="Obayashi M."/>
            <person name="Nishi T."/>
            <person name="Shibahara T."/>
            <person name="Tanaka T."/>
            <person name="Ishii S."/>
            <person name="Yamamoto J."/>
            <person name="Saito K."/>
            <person name="Kawai Y."/>
            <person name="Isono Y."/>
            <person name="Nakamura Y."/>
            <person name="Nagahari K."/>
            <person name="Murakami K."/>
            <person name="Yasuda T."/>
            <person name="Iwayanagi T."/>
            <person name="Wagatsuma M."/>
            <person name="Shiratori A."/>
            <person name="Sudo H."/>
            <person name="Hosoiri T."/>
            <person name="Kaku Y."/>
            <person name="Kodaira H."/>
            <person name="Kondo H."/>
            <person name="Sugawara M."/>
            <person name="Takahashi M."/>
            <person name="Kanda K."/>
            <person name="Yokoi T."/>
            <person name="Furuya T."/>
            <person name="Kikkawa E."/>
            <person name="Omura Y."/>
            <person name="Abe K."/>
            <person name="Kamihara K."/>
            <person name="Katsuta N."/>
            <person name="Sato K."/>
            <person name="Tanikawa M."/>
            <person name="Yamazaki M."/>
            <person name="Ninomiya K."/>
            <person name="Ishibashi T."/>
            <person name="Yamashita H."/>
            <person name="Murakawa K."/>
            <person name="Fujimori K."/>
            <person name="Tanai H."/>
            <person name="Kimata M."/>
            <person name="Watanabe M."/>
            <person name="Hiraoka S."/>
            <person name="Chiba Y."/>
            <person name="Ishida S."/>
            <person name="Ono Y."/>
            <person name="Takiguchi S."/>
            <person name="Watanabe S."/>
            <person name="Yosida M."/>
            <person name="Hotuta T."/>
            <person name="Kusano J."/>
            <person name="Kanehori K."/>
            <person name="Takahashi-Fujii A."/>
            <person name="Hara H."/>
            <person name="Tanase T.-O."/>
            <person name="Nomura Y."/>
            <person name="Togiya S."/>
            <person name="Komai F."/>
            <person name="Hara R."/>
            <person name="Takeuchi K."/>
            <person name="Arita M."/>
            <person name="Imose N."/>
            <person name="Musashino K."/>
            <person name="Yuuki H."/>
            <person name="Oshima A."/>
            <person name="Sasaki N."/>
            <person name="Aotsuka S."/>
            <person name="Yoshikawa Y."/>
            <person name="Matsunawa H."/>
            <person name="Ichihara T."/>
            <person name="Shiohata N."/>
            <person name="Sano S."/>
            <person name="Moriya S."/>
            <person name="Momiyama H."/>
            <person name="Satoh N."/>
            <person name="Takami S."/>
            <person name="Terashima Y."/>
            <person name="Suzuki O."/>
            <person name="Nakagawa S."/>
            <person name="Senoh A."/>
            <person name="Mizoguchi H."/>
            <person name="Goto Y."/>
            <person name="Shimizu F."/>
            <person name="Wakebe H."/>
            <person name="Hishigaki H."/>
            <person name="Watanabe T."/>
            <person name="Sugiyama A."/>
            <person name="Takemoto M."/>
            <person name="Kawakami B."/>
            <person name="Yamazaki M."/>
            <person name="Watanabe K."/>
            <person name="Kumagai A."/>
            <person name="Itakura S."/>
            <person name="Fukuzumi Y."/>
            <person name="Fujimori Y."/>
            <person name="Komiyama M."/>
            <person name="Tashiro H."/>
            <person name="Tanigami A."/>
            <person name="Fujiwara T."/>
            <person name="Ono T."/>
            <person name="Yamada K."/>
            <person name="Fujii Y."/>
            <person name="Ozaki K."/>
            <person name="Hirao M."/>
            <person name="Ohmori Y."/>
            <person name="Kawabata A."/>
            <person name="Hikiji T."/>
            <person name="Kobatake N."/>
            <person name="Inagaki H."/>
            <person name="Ikema Y."/>
            <person name="Okamoto S."/>
            <person name="Okitani R."/>
            <person name="Kawakami T."/>
            <person name="Noguchi S."/>
            <person name="Itoh T."/>
            <person name="Shigeta K."/>
            <person name="Senba T."/>
            <person name="Matsumura K."/>
            <person name="Nakajima Y."/>
            <person name="Mizuno T."/>
            <person name="Morinaga M."/>
            <person name="Sasaki M."/>
            <person name="Togashi T."/>
            <person name="Oyama M."/>
            <person name="Hata H."/>
            <person name="Watanabe M."/>
            <person name="Komatsu T."/>
            <person name="Mizushima-Sugano J."/>
            <person name="Satoh T."/>
            <person name="Shirai Y."/>
            <person name="Takahashi Y."/>
            <person name="Nakagawa K."/>
            <person name="Okumura K."/>
            <person name="Nagase T."/>
            <person name="Nomura N."/>
            <person name="Kikuchi H."/>
            <person name="Masuho Y."/>
            <person name="Yamashita R."/>
            <person name="Nakai K."/>
            <person name="Yada T."/>
            <person name="Nakamura Y."/>
            <person name="Ohara O."/>
            <person name="Isogai T."/>
            <person name="Sugano S."/>
        </authorList>
    </citation>
    <scope>NUCLEOTIDE SEQUENCE [LARGE SCALE MRNA] (ISOFORMS 10 AND 12)</scope>
    <scope>VARIANT THR-289</scope>
    <source>
        <tissue>Hippocampus</tissue>
    </source>
</reference>
<reference key="6">
    <citation type="journal article" date="2006" name="Nature">
        <title>DNA sequence and analysis of human chromosome 8.</title>
        <authorList>
            <person name="Nusbaum C."/>
            <person name="Mikkelsen T.S."/>
            <person name="Zody M.C."/>
            <person name="Asakawa S."/>
            <person name="Taudien S."/>
            <person name="Garber M."/>
            <person name="Kodira C.D."/>
            <person name="Schueler M.G."/>
            <person name="Shimizu A."/>
            <person name="Whittaker C.A."/>
            <person name="Chang J.L."/>
            <person name="Cuomo C.A."/>
            <person name="Dewar K."/>
            <person name="FitzGerald M.G."/>
            <person name="Yang X."/>
            <person name="Allen N.R."/>
            <person name="Anderson S."/>
            <person name="Asakawa T."/>
            <person name="Blechschmidt K."/>
            <person name="Bloom T."/>
            <person name="Borowsky M.L."/>
            <person name="Butler J."/>
            <person name="Cook A."/>
            <person name="Corum B."/>
            <person name="DeArellano K."/>
            <person name="DeCaprio D."/>
            <person name="Dooley K.T."/>
            <person name="Dorris L. III"/>
            <person name="Engels R."/>
            <person name="Gloeckner G."/>
            <person name="Hafez N."/>
            <person name="Hagopian D.S."/>
            <person name="Hall J.L."/>
            <person name="Ishikawa S.K."/>
            <person name="Jaffe D.B."/>
            <person name="Kamat A."/>
            <person name="Kudoh J."/>
            <person name="Lehmann R."/>
            <person name="Lokitsang T."/>
            <person name="Macdonald P."/>
            <person name="Major J.E."/>
            <person name="Matthews C.D."/>
            <person name="Mauceli E."/>
            <person name="Menzel U."/>
            <person name="Mihalev A.H."/>
            <person name="Minoshima S."/>
            <person name="Murayama Y."/>
            <person name="Naylor J.W."/>
            <person name="Nicol R."/>
            <person name="Nguyen C."/>
            <person name="O'Leary S.B."/>
            <person name="O'Neill K."/>
            <person name="Parker S.C.J."/>
            <person name="Polley A."/>
            <person name="Raymond C.K."/>
            <person name="Reichwald K."/>
            <person name="Rodriguez J."/>
            <person name="Sasaki T."/>
            <person name="Schilhabel M."/>
            <person name="Siddiqui R."/>
            <person name="Smith C.L."/>
            <person name="Sneddon T.P."/>
            <person name="Talamas J.A."/>
            <person name="Tenzin P."/>
            <person name="Topham K."/>
            <person name="Venkataraman V."/>
            <person name="Wen G."/>
            <person name="Yamazaki S."/>
            <person name="Young S.K."/>
            <person name="Zeng Q."/>
            <person name="Zimmer A.R."/>
            <person name="Rosenthal A."/>
            <person name="Birren B.W."/>
            <person name="Platzer M."/>
            <person name="Shimizu N."/>
            <person name="Lander E.S."/>
        </authorList>
    </citation>
    <scope>NUCLEOTIDE SEQUENCE [LARGE SCALE GENOMIC DNA]</scope>
</reference>
<reference key="7">
    <citation type="submission" date="2005-09" db="EMBL/GenBank/DDBJ databases">
        <authorList>
            <person name="Mural R.J."/>
            <person name="Istrail S."/>
            <person name="Sutton G.G."/>
            <person name="Florea L."/>
            <person name="Halpern A.L."/>
            <person name="Mobarry C.M."/>
            <person name="Lippert R."/>
            <person name="Walenz B."/>
            <person name="Shatkay H."/>
            <person name="Dew I."/>
            <person name="Miller J.R."/>
            <person name="Flanigan M.J."/>
            <person name="Edwards N.J."/>
            <person name="Bolanos R."/>
            <person name="Fasulo D."/>
            <person name="Halldorsson B.V."/>
            <person name="Hannenhalli S."/>
            <person name="Turner R."/>
            <person name="Yooseph S."/>
            <person name="Lu F."/>
            <person name="Nusskern D.R."/>
            <person name="Shue B.C."/>
            <person name="Zheng X.H."/>
            <person name="Zhong F."/>
            <person name="Delcher A.L."/>
            <person name="Huson D.H."/>
            <person name="Kravitz S.A."/>
            <person name="Mouchard L."/>
            <person name="Reinert K."/>
            <person name="Remington K.A."/>
            <person name="Clark A.G."/>
            <person name="Waterman M.S."/>
            <person name="Eichler E.E."/>
            <person name="Adams M.D."/>
            <person name="Hunkapiller M.W."/>
            <person name="Myers E.W."/>
            <person name="Venter J.C."/>
        </authorList>
    </citation>
    <scope>NUCLEOTIDE SEQUENCE [LARGE SCALE GENOMIC DNA]</scope>
</reference>
<reference key="8">
    <citation type="journal article" date="1997" name="Oncogene">
        <title>Gamma-heregulin: a novel heregulin isoform that is an autocrine growth factor for the human breast cancer cell line, MDA-MB-175.</title>
        <authorList>
            <person name="Schaefer G."/>
            <person name="Fitzpatrick V.D."/>
            <person name="Sliwkowski M.X."/>
        </authorList>
    </citation>
    <scope>NUCLEOTIDE SEQUENCE [MRNA] OF GAMMA-HEREGULIN FUSION PROTEIN</scope>
    <source>
        <tissue>Mammary cancer</tissue>
    </source>
</reference>
<reference key="9">
    <citation type="journal article" date="2002" name="Am. J. Hum. Genet.">
        <title>Neuregulin 1 and susceptibility to Schizophrenia.</title>
        <authorList>
            <person name="Stefansson H."/>
            <person name="Sigurdsson E."/>
            <person name="Steinthorsdottir V."/>
            <person name="Bjornsdottir S."/>
            <person name="Sigmundsson T."/>
            <person name="Ghosh S."/>
            <person name="Brynjolfsson J."/>
            <person name="Gunnarsdottir S."/>
            <person name="Ivarsson O."/>
            <person name="Chou T.T."/>
            <person name="Hjaltason O."/>
            <person name="Birgisdottir B."/>
            <person name="Jonsson H."/>
            <person name="Gudnadottir V.G."/>
            <person name="Gudmundsdottir E."/>
            <person name="Bjornsson A."/>
            <person name="Ingvarsson B."/>
            <person name="Ingason A."/>
            <person name="Sigfusson S."/>
            <person name="Hardardottir H."/>
            <person name="Harvey R.P."/>
            <person name="Brunner D."/>
            <person name="Mutel V."/>
            <person name="Gonzalo A."/>
            <person name="Lemke G."/>
            <person name="Sainz J."/>
            <person name="Johannesson G."/>
            <person name="Andresson T."/>
            <person name="Gudbjartsson D."/>
            <person name="Manolescu A."/>
            <person name="Frigge M.L."/>
            <person name="Gurney M.E."/>
            <person name="Kong A."/>
            <person name="Gulcher J.R."/>
            <person name="Petursson H."/>
            <person name="Stefansson K."/>
        </authorList>
    </citation>
    <scope>NUCLEOTIDE SEQUENCE [GENOMIC DNA] (ISOFORMS 1; 3; 8 AND 9)</scope>
    <scope>SUSCEPTIBILITY TO SCHIZOPHRENIA</scope>
</reference>
<reference key="10">
    <citation type="journal article" date="2007" name="J. Biol. Chem.">
        <title>Molecular cloning of a brain-specific, developmentally regulated neuregulin 1 (NRG1) isoform and identification of a functional promoter variant associated with schizophrenia.</title>
        <authorList>
            <person name="Tan W."/>
            <person name="Wang Y."/>
            <person name="Gold B."/>
            <person name="Chen J."/>
            <person name="Dean M."/>
            <person name="Harrison P.J."/>
            <person name="Weinberger D.R."/>
            <person name="Law A.J."/>
        </authorList>
    </citation>
    <scope>NUCLEOTIDE SEQUENCE [MRNA] (ISOFORM 11)</scope>
    <scope>ALTERNATIVE SPLICING</scope>
    <scope>VARIANTS GLN-38 AND THR-289</scope>
    <scope>TISSUE SPECIFICITY</scope>
    <scope>DEVELOPMENTAL STAGE</scope>
    <source>
        <tissue>Hippocampus</tissue>
        <tissue>Prefrontal cortex</tissue>
    </source>
</reference>
<reference key="11">
    <citation type="journal article" date="2004" name="Genome Res.">
        <title>The status, quality, and expansion of the NIH full-length cDNA project: the Mammalian Gene Collection (MGC).</title>
        <authorList>
            <consortium name="The MGC Project Team"/>
        </authorList>
    </citation>
    <scope>NUCLEOTIDE SEQUENCE [LARGE SCALE MRNA] (ISOFORMS 1 AND 10)</scope>
    <source>
        <tissue>Brain</tissue>
        <tissue>Duodenum</tissue>
    </source>
</reference>
<reference key="12">
    <citation type="submission" date="1997-09" db="EMBL/GenBank/DDBJ databases">
        <authorList>
            <person name="Schoumacher F."/>
            <person name="Herzer S."/>
            <person name="Flury N."/>
            <person name="Kueng W."/>
            <person name="Mueller H."/>
            <person name="Eppenberger U."/>
        </authorList>
    </citation>
    <scope>NUCLEOTIDE SEQUENCE [MRNA] OF 1-211 (ISOFORM 1)</scope>
</reference>
<reference key="13">
    <citation type="journal article" date="1993" name="J. Biol. Chem.">
        <title>Characterization of a breast cancer cell differentiation factor that specifically activates the HER4/p180erbB4 receptor.</title>
        <authorList>
            <person name="Culouscou J.-M."/>
            <person name="Plowman G.D."/>
            <person name="Carlton G.W."/>
            <person name="Green J.M."/>
            <person name="Shoyab M."/>
        </authorList>
    </citation>
    <scope>PROTEIN SEQUENCE OF 20-28</scope>
</reference>
<reference key="14">
    <citation type="journal article" date="1992" name="Cell">
        <title>Isolation of the neu/HER-2 stimulatory ligand: a 44 kd glycoprotein that induces differentiation of mammary tumor cells.</title>
        <authorList>
            <person name="Peles E."/>
            <person name="Bacus S.S."/>
            <person name="Koski R.A."/>
            <person name="Lu H.S."/>
            <person name="Wen D."/>
            <person name="Ogden S.G."/>
            <person name="Levy R.B."/>
            <person name="Yarden Y."/>
        </authorList>
    </citation>
    <scope>PARTIAL PROTEIN SEQUENCE (ISOFORM 1)</scope>
    <scope>FUNCTION</scope>
    <scope>GLYCOSYLATION</scope>
</reference>
<reference key="15">
    <citation type="journal article" date="1993" name="Nature">
        <title>Heregulin induces tyrosine phosphorylation of HER4/p180erbB4.</title>
        <authorList>
            <person name="Plowman G.D."/>
            <person name="Green J.M."/>
            <person name="Culouscou J.M."/>
            <person name="Carlton G.W."/>
            <person name="Rothwell V.M."/>
            <person name="Buckley S."/>
        </authorList>
    </citation>
    <scope>BINDING TO ERBB4</scope>
    <scope>FUNCTION</scope>
</reference>
<reference key="16">
    <citation type="journal article" date="1999" name="Oncogene">
        <title>Gamma-heregulin is the product of a chromosomal translocation fusing the DOC4 and HGL/NRG1 genes in the MDA-MB-175 breast cancer cell line.</title>
        <authorList>
            <person name="Wang X.-Z."/>
            <person name="Jolicoeur E.M."/>
            <person name="Conte N."/>
            <person name="Chaffanet M."/>
            <person name="Zhang Y."/>
            <person name="Mozziconacci M.-J."/>
            <person name="Feiner H."/>
            <person name="Birnbaum D."/>
            <person name="Pebusque M.-J."/>
            <person name="Ron D."/>
        </authorList>
    </citation>
    <scope>CHROMOSOMAL TRANSLOCATION</scope>
</reference>
<reference key="17">
    <citation type="journal article" date="1999" name="Oncogene">
        <title>Gamma-heregulin: a fusion gene of DOC-4 and neuregulin-1 derived from a chromosome translocation.</title>
        <authorList>
            <person name="Liu X."/>
            <person name="Baker E."/>
            <person name="Eyre H.J."/>
            <person name="Sutherland G.R."/>
            <person name="Zhou M."/>
        </authorList>
    </citation>
    <scope>CHROMOSOMAL TRANSLOCATION</scope>
</reference>
<reference key="18">
    <citation type="journal article" date="2000" name="J. Biol. Chem.">
        <title>Ligand discrimination in signaling through an ErbB4 receptor homodimer.</title>
        <authorList>
            <person name="Sweeney C."/>
            <person name="Lai C."/>
            <person name="Riese D.J. II"/>
            <person name="Diamonti A.J."/>
            <person name="Cantley L.C."/>
            <person name="Carraway K.L. III"/>
        </authorList>
    </citation>
    <scope>BINDING TO ERBB4</scope>
</reference>
<reference key="19">
    <citation type="journal article" date="2010" name="J. Biol. Chem.">
        <title>Direct binding of the EGF-like domain of neuregulin-1 to integrins ({alpha}v{beta}3 and {alpha}6{beta}4) is involved in neuregulin-1/ErbB signaling.</title>
        <authorList>
            <person name="Ieguchi K."/>
            <person name="Fujita M."/>
            <person name="Ma Z."/>
            <person name="Davari P."/>
            <person name="Taniguchi Y."/>
            <person name="Sekiguchi K."/>
            <person name="Wang B."/>
            <person name="Takada Y.K."/>
            <person name="Takada Y."/>
        </authorList>
    </citation>
    <scope>FUNCTION</scope>
    <scope>BINDING TO ERBB3 AND INTEGRINS</scope>
    <scope>IDENTIFICATION IN A TERNARY COMPLEX WITH ERBB3 AND INTEGRINS</scope>
    <scope>MUTAGENESIS OF LYS-181; LYS-185 AND LYS-187</scope>
</reference>
<reference key="20">
    <citation type="journal article" date="1994" name="EMBO J.">
        <title>Solution structure of the epidermal growth factor-like domain of heregulin-alpha, a ligand for p180erbB-4.</title>
        <authorList>
            <person name="Nagata K."/>
            <person name="Kohda D."/>
            <person name="Hatanaka H."/>
            <person name="Ichikawa S."/>
            <person name="Matsuda S."/>
            <person name="Yamamoto T."/>
            <person name="Suzuki A."/>
            <person name="Inagaki F."/>
        </authorList>
    </citation>
    <scope>STRUCTURE BY NMR OF 175-241 (ISOFORM 1)</scope>
</reference>
<reference key="21">
    <citation type="journal article" date="1996" name="Biochemistry">
        <title>High-resolution solution structure of the EGF-like domain of heregulin-alpha.</title>
        <authorList>
            <person name="Jacobsen N.E."/>
            <person name="Abadi N."/>
            <person name="Sliwkowski M.X."/>
            <person name="Reilly D."/>
            <person name="Skelton N.J."/>
            <person name="Fairbrother W.J."/>
        </authorList>
    </citation>
    <scope>STRUCTURE BY NMR OF 177-239 (ISOFORM 1)</scope>
    <scope>DISULFIDE BONDS</scope>
</reference>
<protein>
    <recommendedName>
        <fullName>Pro-neuregulin-1, membrane-bound isoform</fullName>
        <shortName>Pro-NRG1</shortName>
    </recommendedName>
    <component>
        <recommendedName>
            <fullName>Neuregulin-1</fullName>
        </recommendedName>
        <alternativeName>
            <fullName>Acetylcholine receptor-inducing activity</fullName>
            <shortName>ARIA</shortName>
        </alternativeName>
        <alternativeName>
            <fullName>Breast cancer cell differentiation factor p45</fullName>
        </alternativeName>
        <alternativeName>
            <fullName>Glial growth factor</fullName>
        </alternativeName>
        <alternativeName>
            <fullName>Heregulin</fullName>
            <shortName>HRG</shortName>
        </alternativeName>
        <alternativeName>
            <fullName>Neu differentiation factor</fullName>
        </alternativeName>
        <alternativeName>
            <fullName>Sensory and motor neuron-derived factor</fullName>
        </alternativeName>
    </component>
</protein>
<gene>
    <name type="primary">NRG1</name>
    <name type="synonym">GGF</name>
    <name type="synonym">HGL</name>
    <name type="synonym">HRGA</name>
    <name type="synonym">NDF</name>
    <name type="synonym">SMDF</name>
</gene>
<dbReference type="EMBL" id="M94165">
    <property type="protein sequence ID" value="AAA58638.1"/>
    <property type="molecule type" value="mRNA"/>
</dbReference>
<dbReference type="EMBL" id="M94166">
    <property type="protein sequence ID" value="AAA58639.1"/>
    <property type="molecule type" value="mRNA"/>
</dbReference>
<dbReference type="EMBL" id="M94167">
    <property type="protein sequence ID" value="AAA58640.1"/>
    <property type="molecule type" value="mRNA"/>
</dbReference>
<dbReference type="EMBL" id="M94168">
    <property type="protein sequence ID" value="AAA58641.1"/>
    <property type="molecule type" value="mRNA"/>
</dbReference>
<dbReference type="EMBL" id="U02325">
    <property type="protein sequence ID" value="AAA19950.1"/>
    <property type="molecule type" value="mRNA"/>
</dbReference>
<dbReference type="EMBL" id="U02326">
    <property type="protein sequence ID" value="AAA19951.1"/>
    <property type="molecule type" value="mRNA"/>
</dbReference>
<dbReference type="EMBL" id="U02327">
    <property type="protein sequence ID" value="AAA19952.1"/>
    <property type="molecule type" value="mRNA"/>
</dbReference>
<dbReference type="EMBL" id="U02328">
    <property type="protein sequence ID" value="AAA19953.1"/>
    <property type="molecule type" value="mRNA"/>
</dbReference>
<dbReference type="EMBL" id="U02329">
    <property type="protein sequence ID" value="AAA19954.1"/>
    <property type="molecule type" value="mRNA"/>
</dbReference>
<dbReference type="EMBL" id="U02330">
    <property type="protein sequence ID" value="AAA19955.1"/>
    <property type="status" value="ALT_SEQ"/>
    <property type="molecule type" value="mRNA"/>
</dbReference>
<dbReference type="EMBL" id="L12260">
    <property type="protein sequence ID" value="AAB59622.1"/>
    <property type="molecule type" value="mRNA"/>
</dbReference>
<dbReference type="EMBL" id="L12261">
    <property type="protein sequence ID" value="AAB59358.1"/>
    <property type="molecule type" value="mRNA"/>
</dbReference>
<dbReference type="EMBL" id="L41827">
    <property type="protein sequence ID" value="AAC41764.1"/>
    <property type="molecule type" value="mRNA"/>
</dbReference>
<dbReference type="EMBL" id="AK289927">
    <property type="protein sequence ID" value="BAF82616.1"/>
    <property type="molecule type" value="mRNA"/>
</dbReference>
<dbReference type="EMBL" id="AK298132">
    <property type="protein sequence ID" value="BAH12729.1"/>
    <property type="molecule type" value="mRNA"/>
</dbReference>
<dbReference type="EMBL" id="AC021909">
    <property type="status" value="NOT_ANNOTATED_CDS"/>
    <property type="molecule type" value="Genomic_DNA"/>
</dbReference>
<dbReference type="EMBL" id="AC022833">
    <property type="status" value="NOT_ANNOTATED_CDS"/>
    <property type="molecule type" value="Genomic_DNA"/>
</dbReference>
<dbReference type="EMBL" id="AC022850">
    <property type="status" value="NOT_ANNOTATED_CDS"/>
    <property type="molecule type" value="Genomic_DNA"/>
</dbReference>
<dbReference type="EMBL" id="AC023948">
    <property type="status" value="NOT_ANNOTATED_CDS"/>
    <property type="molecule type" value="Genomic_DNA"/>
</dbReference>
<dbReference type="EMBL" id="AC068359">
    <property type="status" value="NOT_ANNOTATED_CDS"/>
    <property type="molecule type" value="Genomic_DNA"/>
</dbReference>
<dbReference type="EMBL" id="AC068931">
    <property type="status" value="NOT_ANNOTATED_CDS"/>
    <property type="molecule type" value="Genomic_DNA"/>
</dbReference>
<dbReference type="EMBL" id="AC083977">
    <property type="status" value="NOT_ANNOTATED_CDS"/>
    <property type="molecule type" value="Genomic_DNA"/>
</dbReference>
<dbReference type="EMBL" id="AC103675">
    <property type="status" value="NOT_ANNOTATED_CDS"/>
    <property type="molecule type" value="Genomic_DNA"/>
</dbReference>
<dbReference type="EMBL" id="AC104000">
    <property type="status" value="NOT_ANNOTATED_CDS"/>
    <property type="molecule type" value="Genomic_DNA"/>
</dbReference>
<dbReference type="EMBL" id="AC104029">
    <property type="status" value="NOT_ANNOTATED_CDS"/>
    <property type="molecule type" value="Genomic_DNA"/>
</dbReference>
<dbReference type="EMBL" id="AC113209">
    <property type="status" value="NOT_ANNOTATED_CDS"/>
    <property type="molecule type" value="Genomic_DNA"/>
</dbReference>
<dbReference type="EMBL" id="AF009227">
    <property type="protein sequence ID" value="AAC51756.1"/>
    <property type="status" value="ALT_INIT"/>
    <property type="molecule type" value="mRNA"/>
</dbReference>
<dbReference type="EMBL" id="AF491780">
    <property type="protein sequence ID" value="AAM71137.1"/>
    <property type="molecule type" value="Genomic_DNA"/>
</dbReference>
<dbReference type="EMBL" id="AF491780">
    <property type="protein sequence ID" value="AAM71139.1"/>
    <property type="molecule type" value="Genomic_DNA"/>
</dbReference>
<dbReference type="EMBL" id="AF491780">
    <property type="protein sequence ID" value="AAM71140.1"/>
    <property type="molecule type" value="Genomic_DNA"/>
</dbReference>
<dbReference type="EMBL" id="EF372273">
    <property type="protein sequence ID" value="ABQ53539.1"/>
    <property type="molecule type" value="mRNA"/>
</dbReference>
<dbReference type="EMBL" id="EF372274">
    <property type="protein sequence ID" value="ABQ53540.1"/>
    <property type="molecule type" value="mRNA"/>
</dbReference>
<dbReference type="EMBL" id="CH471080">
    <property type="protein sequence ID" value="EAW63411.1"/>
    <property type="molecule type" value="Genomic_DNA"/>
</dbReference>
<dbReference type="EMBL" id="BC064587">
    <property type="protein sequence ID" value="AAH64587.1"/>
    <property type="molecule type" value="mRNA"/>
</dbReference>
<dbReference type="EMBL" id="BC073871">
    <property type="protein sequence ID" value="AAH73871.1"/>
    <property type="molecule type" value="mRNA"/>
</dbReference>
<dbReference type="EMBL" id="AF026146">
    <property type="protein sequence ID" value="AAD01795.1"/>
    <property type="molecule type" value="mRNA"/>
</dbReference>
<dbReference type="EMBL" id="BK000383">
    <property type="protein sequence ID" value="DAA00044.1"/>
    <property type="molecule type" value="Genomic_DNA"/>
</dbReference>
<dbReference type="EMBL" id="BK000383">
    <property type="protein sequence ID" value="DAA00045.1"/>
    <property type="molecule type" value="Genomic_DNA"/>
</dbReference>
<dbReference type="EMBL" id="BK000383">
    <property type="protein sequence ID" value="DAA00046.1"/>
    <property type="molecule type" value="Genomic_DNA"/>
</dbReference>
<dbReference type="EMBL" id="BK000383">
    <property type="protein sequence ID" value="DAA00047.1"/>
    <property type="molecule type" value="Genomic_DNA"/>
</dbReference>
<dbReference type="CCDS" id="CCDS47836.1">
    <molecule id="Q02297-9"/>
</dbReference>
<dbReference type="CCDS" id="CCDS55218.1">
    <molecule id="Q02297-11"/>
</dbReference>
<dbReference type="CCDS" id="CCDS55219.1">
    <molecule id="Q02297-12"/>
</dbReference>
<dbReference type="CCDS" id="CCDS6083.1">
    <molecule id="Q02297-6"/>
</dbReference>
<dbReference type="CCDS" id="CCDS6084.1">
    <molecule id="Q02297-7"/>
</dbReference>
<dbReference type="CCDS" id="CCDS6085.1">
    <molecule id="Q02297-1"/>
</dbReference>
<dbReference type="CCDS" id="CCDS6086.1">
    <molecule id="Q02297-3"/>
</dbReference>
<dbReference type="CCDS" id="CCDS6087.1">
    <molecule id="Q02297-10"/>
</dbReference>
<dbReference type="CCDS" id="CCDS94274.1">
    <molecule id="Q02297-8"/>
</dbReference>
<dbReference type="PIR" id="A43273">
    <property type="entry name" value="A43273"/>
</dbReference>
<dbReference type="PIR" id="A56943">
    <property type="entry name" value="A56943"/>
</dbReference>
<dbReference type="PIR" id="B43273">
    <property type="entry name" value="B43273"/>
</dbReference>
<dbReference type="PIR" id="C43273">
    <property type="entry name" value="C43273"/>
</dbReference>
<dbReference type="PIR" id="D43273">
    <property type="entry name" value="D43273"/>
</dbReference>
<dbReference type="PIR" id="I38403">
    <property type="entry name" value="I38403"/>
</dbReference>
<dbReference type="PIR" id="I38404">
    <property type="entry name" value="I38404"/>
</dbReference>
<dbReference type="PIR" id="I38408">
    <property type="entry name" value="I38408"/>
</dbReference>
<dbReference type="PIR" id="S32357">
    <property type="entry name" value="S32357"/>
</dbReference>
<dbReference type="RefSeq" id="NP_001153467.1">
    <property type="nucleotide sequence ID" value="NM_001159995.2"/>
</dbReference>
<dbReference type="RefSeq" id="NP_001153471.1">
    <property type="nucleotide sequence ID" value="NM_001159999.2"/>
</dbReference>
<dbReference type="RefSeq" id="NP_001153473.1">
    <molecule id="Q02297-11"/>
    <property type="nucleotide sequence ID" value="NM_001160001.3"/>
</dbReference>
<dbReference type="RefSeq" id="NP_001153477.1">
    <property type="nucleotide sequence ID" value="NM_001160005.1"/>
</dbReference>
<dbReference type="RefSeq" id="NP_001153480.1">
    <molecule id="Q02297-12"/>
    <property type="nucleotide sequence ID" value="NM_001160008.2"/>
</dbReference>
<dbReference type="RefSeq" id="NP_001309134.1">
    <property type="nucleotide sequence ID" value="NM_001322205.1"/>
</dbReference>
<dbReference type="RefSeq" id="NP_001309135.1">
    <property type="nucleotide sequence ID" value="NM_001322206.1"/>
</dbReference>
<dbReference type="RefSeq" id="NP_001309136.1">
    <property type="nucleotide sequence ID" value="NM_001322207.1"/>
</dbReference>
<dbReference type="RefSeq" id="NP_039250.2">
    <molecule id="Q02297-6"/>
    <property type="nucleotide sequence ID" value="NM_013956.5"/>
</dbReference>
<dbReference type="RefSeq" id="NP_039251.2">
    <molecule id="Q02297-7"/>
    <property type="nucleotide sequence ID" value="NM_013957.5"/>
</dbReference>
<dbReference type="RefSeq" id="NP_039252.2">
    <molecule id="Q02297-8"/>
    <property type="nucleotide sequence ID" value="NM_013958.4"/>
</dbReference>
<dbReference type="RefSeq" id="NP_039253.1">
    <molecule id="Q02297-10"/>
    <property type="nucleotide sequence ID" value="NM_013959.4"/>
</dbReference>
<dbReference type="RefSeq" id="NP_039254.1">
    <molecule id="Q02297-3"/>
    <property type="nucleotide sequence ID" value="NM_013960.5"/>
</dbReference>
<dbReference type="RefSeq" id="NP_039256.2">
    <molecule id="Q02297-9"/>
    <property type="nucleotide sequence ID" value="NM_013962.3"/>
</dbReference>
<dbReference type="RefSeq" id="NP_039258.1">
    <molecule id="Q02297-1"/>
    <property type="nucleotide sequence ID" value="NM_013964.5"/>
</dbReference>
<dbReference type="PDB" id="1HAE">
    <property type="method" value="NMR"/>
    <property type="chains" value="A=177-239"/>
</dbReference>
<dbReference type="PDB" id="1HAF">
    <property type="method" value="NMR"/>
    <property type="chains" value="A=177-239"/>
</dbReference>
<dbReference type="PDB" id="1HRE">
    <property type="method" value="NMR"/>
    <property type="chains" value="A=175-241"/>
</dbReference>
<dbReference type="PDB" id="1HRF">
    <property type="method" value="NMR"/>
    <property type="chains" value="A=175-241"/>
</dbReference>
<dbReference type="PDB" id="3U7U">
    <property type="method" value="X-ray"/>
    <property type="resolution" value="3.03 A"/>
    <property type="chains" value="G/H/I/J/K/L=175-212"/>
</dbReference>
<dbReference type="PDB" id="7MN5">
    <property type="method" value="EM"/>
    <property type="resolution" value="2.93 A"/>
    <property type="chains" value="H=176-237"/>
</dbReference>
<dbReference type="PDB" id="7MN6">
    <property type="method" value="EM"/>
    <property type="resolution" value="3.09 A"/>
    <property type="chains" value="H=176-237"/>
</dbReference>
<dbReference type="PDB" id="7MN8">
    <property type="method" value="EM"/>
    <property type="resolution" value="3.45 A"/>
    <property type="chains" value="H=176-237"/>
</dbReference>
<dbReference type="PDB" id="7SJL">
    <property type="method" value="NMR"/>
    <property type="chains" value="A=34-133"/>
</dbReference>
<dbReference type="PDB" id="8U4I">
    <property type="method" value="EM"/>
    <property type="resolution" value="3.38 A"/>
    <property type="chains" value="C/D=177-225"/>
</dbReference>
<dbReference type="PDB" id="8U4L">
    <property type="method" value="EM"/>
    <property type="resolution" value="3.31 A"/>
    <property type="chains" value="C=177-225"/>
</dbReference>
<dbReference type="PDBsum" id="1HAE"/>
<dbReference type="PDBsum" id="1HAF"/>
<dbReference type="PDBsum" id="1HRE"/>
<dbReference type="PDBsum" id="1HRF"/>
<dbReference type="PDBsum" id="3U7U"/>
<dbReference type="PDBsum" id="7MN5"/>
<dbReference type="PDBsum" id="7MN6"/>
<dbReference type="PDBsum" id="7MN8"/>
<dbReference type="PDBsum" id="7SJL"/>
<dbReference type="PDBsum" id="8U4I"/>
<dbReference type="PDBsum" id="8U4L"/>
<dbReference type="EMDB" id="EMD-41883"/>
<dbReference type="EMDB" id="EMD-41886"/>
<dbReference type="SMR" id="Q02297"/>
<dbReference type="BioGRID" id="109332">
    <property type="interactions" value="110"/>
</dbReference>
<dbReference type="CORUM" id="Q02297"/>
<dbReference type="DIP" id="DIP-355N"/>
<dbReference type="FunCoup" id="Q02297">
    <property type="interactions" value="633"/>
</dbReference>
<dbReference type="IntAct" id="Q02297">
    <property type="interactions" value="82"/>
</dbReference>
<dbReference type="MINT" id="Q02297"/>
<dbReference type="STRING" id="9606.ENSP00000287842"/>
<dbReference type="GlyCosmos" id="Q02297">
    <property type="glycosylation" value="3 sites, No reported glycans"/>
</dbReference>
<dbReference type="GlyGen" id="Q02297">
    <property type="glycosylation" value="5 sites, 1 O-linked glycan (1 site)"/>
</dbReference>
<dbReference type="iPTMnet" id="Q02297"/>
<dbReference type="PhosphoSitePlus" id="Q02297"/>
<dbReference type="BioMuta" id="NRG1"/>
<dbReference type="DMDM" id="9297018"/>
<dbReference type="jPOST" id="Q02297"/>
<dbReference type="MassIVE" id="Q02297"/>
<dbReference type="PaxDb" id="9606-ENSP00000384620"/>
<dbReference type="PeptideAtlas" id="Q02297"/>
<dbReference type="ProteomicsDB" id="20533"/>
<dbReference type="ProteomicsDB" id="58070">
    <molecule id="Q02297-1"/>
</dbReference>
<dbReference type="ProteomicsDB" id="58071">
    <molecule id="Q02297-10"/>
</dbReference>
<dbReference type="ProteomicsDB" id="58072">
    <molecule id="Q02297-11"/>
</dbReference>
<dbReference type="ProteomicsDB" id="58073">
    <molecule id="Q02297-2"/>
</dbReference>
<dbReference type="ProteomicsDB" id="58074">
    <molecule id="Q02297-3"/>
</dbReference>
<dbReference type="ProteomicsDB" id="58075">
    <molecule id="Q02297-4"/>
</dbReference>
<dbReference type="ProteomicsDB" id="58076">
    <molecule id="Q02297-6"/>
</dbReference>
<dbReference type="ProteomicsDB" id="58077">
    <molecule id="Q02297-7"/>
</dbReference>
<dbReference type="ProteomicsDB" id="58078">
    <molecule id="Q02297-8"/>
</dbReference>
<dbReference type="ProteomicsDB" id="58079">
    <molecule id="Q02297-9"/>
</dbReference>
<dbReference type="ABCD" id="Q02297">
    <property type="antibodies" value="1 sequenced antibody"/>
</dbReference>
<dbReference type="Antibodypedia" id="3706">
    <property type="antibodies" value="982 antibodies from 45 providers"/>
</dbReference>
<dbReference type="DNASU" id="3084"/>
<dbReference type="Ensembl" id="ENST00000287842.7">
    <molecule id="Q02297-6"/>
    <property type="protein sequence ID" value="ENSP00000287842.4"/>
    <property type="gene ID" value="ENSG00000157168.22"/>
</dbReference>
<dbReference type="Ensembl" id="ENST00000356819.7">
    <molecule id="Q02297-7"/>
    <property type="protein sequence ID" value="ENSP00000349275.6"/>
    <property type="gene ID" value="ENSG00000157168.22"/>
</dbReference>
<dbReference type="Ensembl" id="ENST00000405005.8">
    <molecule id="Q02297-1"/>
    <property type="protein sequence ID" value="ENSP00000384620.2"/>
    <property type="gene ID" value="ENSG00000157168.22"/>
</dbReference>
<dbReference type="Ensembl" id="ENST00000519301.6">
    <molecule id="Q02297-11"/>
    <property type="protein sequence ID" value="ENSP00000429582.1"/>
    <property type="gene ID" value="ENSG00000157168.22"/>
</dbReference>
<dbReference type="Ensembl" id="ENST00000520407.5">
    <molecule id="Q02297-9"/>
    <property type="protein sequence ID" value="ENSP00000434640.1"/>
    <property type="gene ID" value="ENSG00000157168.22"/>
</dbReference>
<dbReference type="Ensembl" id="ENST00000520502.7">
    <molecule id="Q02297-10"/>
    <property type="protein sequence ID" value="ENSP00000433289.1"/>
    <property type="gene ID" value="ENSG00000157168.22"/>
</dbReference>
<dbReference type="Ensembl" id="ENST00000521670.5">
    <molecule id="Q02297-3"/>
    <property type="protein sequence ID" value="ENSP00000428828.1"/>
    <property type="gene ID" value="ENSG00000157168.22"/>
</dbReference>
<dbReference type="Ensembl" id="ENST00000523079.5">
    <molecule id="Q02297-12"/>
    <property type="protein sequence ID" value="ENSP00000430120.1"/>
    <property type="gene ID" value="ENSG00000157168.22"/>
</dbReference>
<dbReference type="Ensembl" id="ENST00000650919.1">
    <molecule id="Q02297-8"/>
    <property type="protein sequence ID" value="ENSP00000498811.1"/>
    <property type="gene ID" value="ENSG00000157168.22"/>
</dbReference>
<dbReference type="GeneID" id="3084"/>
<dbReference type="KEGG" id="hsa:3084"/>
<dbReference type="MANE-Select" id="ENST00000405005.8">
    <property type="protein sequence ID" value="ENSP00000384620.2"/>
    <property type="RefSeq nucleotide sequence ID" value="NM_013964.5"/>
    <property type="RefSeq protein sequence ID" value="NP_039258.1"/>
</dbReference>
<dbReference type="UCSC" id="uc003xip.4">
    <molecule id="Q02297-1"/>
    <property type="organism name" value="human"/>
</dbReference>
<dbReference type="AGR" id="HGNC:7997"/>
<dbReference type="CTD" id="3084"/>
<dbReference type="DisGeNET" id="3084"/>
<dbReference type="GeneCards" id="NRG1"/>
<dbReference type="HGNC" id="HGNC:7997">
    <property type="gene designation" value="NRG1"/>
</dbReference>
<dbReference type="HPA" id="ENSG00000157168">
    <property type="expression patterns" value="Tissue enhanced (liver)"/>
</dbReference>
<dbReference type="MalaCards" id="NRG1"/>
<dbReference type="MIM" id="142445">
    <property type="type" value="gene"/>
</dbReference>
<dbReference type="neXtProt" id="NX_Q02297"/>
<dbReference type="OpenTargets" id="ENSG00000157168"/>
<dbReference type="PharmGKB" id="PA31776"/>
<dbReference type="VEuPathDB" id="HostDB:ENSG00000157168"/>
<dbReference type="eggNOG" id="ENOG502QRUM">
    <property type="taxonomic scope" value="Eukaryota"/>
</dbReference>
<dbReference type="GeneTree" id="ENSGT00940000157326"/>
<dbReference type="HOGENOM" id="CLU_023628_1_0_1"/>
<dbReference type="InParanoid" id="Q02297"/>
<dbReference type="OMA" id="XKSELRI"/>
<dbReference type="OrthoDB" id="8747558at2759"/>
<dbReference type="PAN-GO" id="Q02297">
    <property type="GO annotations" value="8 GO annotations based on evolutionary models"/>
</dbReference>
<dbReference type="PhylomeDB" id="Q02297"/>
<dbReference type="TreeFam" id="TF332469"/>
<dbReference type="PathwayCommons" id="Q02297"/>
<dbReference type="Reactome" id="R-HSA-1227986">
    <molecule id="Q02297-10"/>
    <property type="pathway name" value="Signaling by ERBB2"/>
</dbReference>
<dbReference type="Reactome" id="R-HSA-1236394">
    <molecule id="Q02297-10"/>
    <property type="pathway name" value="Signaling by ERBB4"/>
</dbReference>
<dbReference type="Reactome" id="R-HSA-1250196">
    <molecule id="Q02297-10"/>
    <property type="pathway name" value="SHC1 events in ERBB2 signaling"/>
</dbReference>
<dbReference type="Reactome" id="R-HSA-1250342">
    <property type="pathway name" value="PI3K events in ERBB4 signaling"/>
</dbReference>
<dbReference type="Reactome" id="R-HSA-1250347">
    <property type="pathway name" value="SHC1 events in ERBB4 signaling"/>
</dbReference>
<dbReference type="Reactome" id="R-HSA-1251985">
    <property type="pathway name" value="Nuclear signaling by ERBB4"/>
</dbReference>
<dbReference type="Reactome" id="R-HSA-1257604">
    <molecule id="Q02297-10"/>
    <property type="pathway name" value="PIP3 activates AKT signaling"/>
</dbReference>
<dbReference type="Reactome" id="R-HSA-1306955">
    <molecule id="Q02297-10"/>
    <property type="pathway name" value="GRB7 events in ERBB2 signaling"/>
</dbReference>
<dbReference type="Reactome" id="R-HSA-1358803">
    <molecule id="Q02297-10"/>
    <property type="pathway name" value="Downregulation of ERBB2:ERBB3 signaling"/>
</dbReference>
<dbReference type="Reactome" id="R-HSA-1963640">
    <property type="pathway name" value="GRB2 events in ERBB2 signaling"/>
</dbReference>
<dbReference type="Reactome" id="R-HSA-1963642">
    <molecule id="Q02297-10"/>
    <property type="pathway name" value="PI3K events in ERBB2 signaling"/>
</dbReference>
<dbReference type="Reactome" id="R-HSA-2219530">
    <molecule id="Q02297-10"/>
    <property type="pathway name" value="Constitutive Signaling by Aberrant PI3K in Cancer"/>
</dbReference>
<dbReference type="Reactome" id="R-HSA-5673001">
    <molecule id="Q02297-10"/>
    <property type="pathway name" value="RAF/MAP kinase cascade"/>
</dbReference>
<dbReference type="Reactome" id="R-HSA-6785631">
    <molecule id="Q02297-10"/>
    <property type="pathway name" value="ERBB2 Regulates Cell Motility"/>
</dbReference>
<dbReference type="Reactome" id="R-HSA-6811558">
    <molecule id="Q02297-10"/>
    <property type="pathway name" value="PI5P, PP2A and IER3 Regulate PI3K/AKT Signaling"/>
</dbReference>
<dbReference type="Reactome" id="R-HSA-8847993">
    <molecule id="Q02297-10"/>
    <property type="pathway name" value="ERBB2 Activates PTK6 Signaling"/>
</dbReference>
<dbReference type="Reactome" id="R-HSA-8863795">
    <molecule id="Q02297-10"/>
    <property type="pathway name" value="Downregulation of ERBB2 signaling"/>
</dbReference>
<dbReference type="Reactome" id="R-HSA-9620244">
    <property type="pathway name" value="Long-term potentiation"/>
</dbReference>
<dbReference type="Reactome" id="R-HSA-9664565">
    <molecule id="Q02297-10"/>
    <property type="pathway name" value="Signaling by ERBB2 KD Mutants"/>
</dbReference>
<dbReference type="Reactome" id="R-HSA-9665686">
    <molecule id="Q02297-10"/>
    <property type="pathway name" value="Signaling by ERBB2 TMD/JMD mutants"/>
</dbReference>
<dbReference type="SignaLink" id="Q02297"/>
<dbReference type="SIGNOR" id="Q02297"/>
<dbReference type="BioGRID-ORCS" id="3084">
    <property type="hits" value="12 hits in 1160 CRISPR screens"/>
</dbReference>
<dbReference type="CD-CODE" id="91857CE7">
    <property type="entry name" value="Nucleolus"/>
</dbReference>
<dbReference type="ChiTaRS" id="NRG1">
    <property type="organism name" value="human"/>
</dbReference>
<dbReference type="EvolutionaryTrace" id="Q02297"/>
<dbReference type="GeneWiki" id="Neuregulin_1"/>
<dbReference type="GenomeRNAi" id="3084"/>
<dbReference type="Pharos" id="Q02297">
    <property type="development level" value="Tbio"/>
</dbReference>
<dbReference type="PRO" id="PR:Q02297"/>
<dbReference type="Proteomes" id="UP000005640">
    <property type="component" value="Chromosome 8"/>
</dbReference>
<dbReference type="RNAct" id="Q02297">
    <property type="molecule type" value="protein"/>
</dbReference>
<dbReference type="Bgee" id="ENSG00000157168">
    <property type="expression patterns" value="Expressed in ventricular zone and 142 other cell types or tissues"/>
</dbReference>
<dbReference type="ExpressionAtlas" id="Q02297">
    <property type="expression patterns" value="baseline and differential"/>
</dbReference>
<dbReference type="GO" id="GO:0016324">
    <property type="term" value="C:apical plasma membrane"/>
    <property type="evidence" value="ECO:0000314"/>
    <property type="project" value="BHF-UCL"/>
</dbReference>
<dbReference type="GO" id="GO:0005576">
    <property type="term" value="C:extracellular region"/>
    <property type="evidence" value="ECO:0000304"/>
    <property type="project" value="Reactome"/>
</dbReference>
<dbReference type="GO" id="GO:0005615">
    <property type="term" value="C:extracellular space"/>
    <property type="evidence" value="ECO:0000314"/>
    <property type="project" value="BHF-UCL"/>
</dbReference>
<dbReference type="GO" id="GO:0098978">
    <property type="term" value="C:glutamatergic synapse"/>
    <property type="evidence" value="ECO:0000314"/>
    <property type="project" value="SynGO"/>
</dbReference>
<dbReference type="GO" id="GO:0016020">
    <property type="term" value="C:membrane"/>
    <property type="evidence" value="ECO:0000303"/>
    <property type="project" value="UniProtKB"/>
</dbReference>
<dbReference type="GO" id="GO:0005654">
    <property type="term" value="C:nucleoplasm"/>
    <property type="evidence" value="ECO:0000314"/>
    <property type="project" value="HPA"/>
</dbReference>
<dbReference type="GO" id="GO:0005886">
    <property type="term" value="C:plasma membrane"/>
    <property type="evidence" value="ECO:0007669"/>
    <property type="project" value="UniProtKB-SubCell"/>
</dbReference>
<dbReference type="GO" id="GO:0045499">
    <property type="term" value="F:chemorepellent activity"/>
    <property type="evidence" value="ECO:0000318"/>
    <property type="project" value="GO_Central"/>
</dbReference>
<dbReference type="GO" id="GO:0005125">
    <property type="term" value="F:cytokine activity"/>
    <property type="evidence" value="ECO:0000304"/>
    <property type="project" value="BHF-UCL"/>
</dbReference>
<dbReference type="GO" id="GO:0043125">
    <property type="term" value="F:ErbB-3 class receptor binding"/>
    <property type="evidence" value="ECO:0000314"/>
    <property type="project" value="BHF-UCL"/>
</dbReference>
<dbReference type="GO" id="GO:0008083">
    <property type="term" value="F:growth factor activity"/>
    <property type="evidence" value="ECO:0000314"/>
    <property type="project" value="BHF-UCL"/>
</dbReference>
<dbReference type="GO" id="GO:0005178">
    <property type="term" value="F:integrin binding"/>
    <property type="evidence" value="ECO:0000314"/>
    <property type="project" value="UniProtKB"/>
</dbReference>
<dbReference type="GO" id="GO:0016151">
    <property type="term" value="F:nickel cation binding"/>
    <property type="evidence" value="ECO:0000353"/>
    <property type="project" value="DisProt"/>
</dbReference>
<dbReference type="GO" id="GO:0030296">
    <property type="term" value="F:protein tyrosine kinase activator activity"/>
    <property type="evidence" value="ECO:0000314"/>
    <property type="project" value="BHF-UCL"/>
</dbReference>
<dbReference type="GO" id="GO:0048018">
    <property type="term" value="F:receptor ligand activity"/>
    <property type="evidence" value="ECO:0000314"/>
    <property type="project" value="MGI"/>
</dbReference>
<dbReference type="GO" id="GO:0030971">
    <property type="term" value="F:receptor tyrosine kinase binding"/>
    <property type="evidence" value="ECO:0000303"/>
    <property type="project" value="UniProtKB"/>
</dbReference>
<dbReference type="GO" id="GO:0005102">
    <property type="term" value="F:signaling receptor binding"/>
    <property type="evidence" value="ECO:0000353"/>
    <property type="project" value="BHF-UCL"/>
</dbReference>
<dbReference type="GO" id="GO:0003712">
    <property type="term" value="F:transcription coregulator activity"/>
    <property type="evidence" value="ECO:0000314"/>
    <property type="project" value="MGI"/>
</dbReference>
<dbReference type="GO" id="GO:0030297">
    <property type="term" value="F:transmembrane receptor protein tyrosine kinase activator activity"/>
    <property type="evidence" value="ECO:0000303"/>
    <property type="project" value="UniProtKB"/>
</dbReference>
<dbReference type="GO" id="GO:0008270">
    <property type="term" value="F:zinc ion binding"/>
    <property type="evidence" value="ECO:0000353"/>
    <property type="project" value="DisProt"/>
</dbReference>
<dbReference type="GO" id="GO:0032148">
    <property type="term" value="P:activation of protein kinase B activity"/>
    <property type="evidence" value="ECO:0000315"/>
    <property type="project" value="UniProtKB"/>
</dbReference>
<dbReference type="GO" id="GO:0007171">
    <property type="term" value="P:activation of transmembrane receptor protein tyrosine kinase activity"/>
    <property type="evidence" value="ECO:0000314"/>
    <property type="project" value="BHF-UCL"/>
</dbReference>
<dbReference type="GO" id="GO:0007420">
    <property type="term" value="P:brain development"/>
    <property type="evidence" value="ECO:0000318"/>
    <property type="project" value="GO_Central"/>
</dbReference>
<dbReference type="GO" id="GO:0055007">
    <property type="term" value="P:cardiac muscle cell differentiation"/>
    <property type="evidence" value="ECO:0000250"/>
    <property type="project" value="BHF-UCL"/>
</dbReference>
<dbReference type="GO" id="GO:0060379">
    <property type="term" value="P:cardiac muscle cell myoblast differentiation"/>
    <property type="evidence" value="ECO:0000314"/>
    <property type="project" value="BHF-UCL"/>
</dbReference>
<dbReference type="GO" id="GO:0007154">
    <property type="term" value="P:cell communication"/>
    <property type="evidence" value="ECO:0000304"/>
    <property type="project" value="BHF-UCL"/>
</dbReference>
<dbReference type="GO" id="GO:0030154">
    <property type="term" value="P:cell differentiation"/>
    <property type="evidence" value="ECO:0000318"/>
    <property type="project" value="GO_Central"/>
</dbReference>
<dbReference type="GO" id="GO:0008283">
    <property type="term" value="P:cell population proliferation"/>
    <property type="evidence" value="ECO:0000314"/>
    <property type="project" value="BHF-UCL"/>
</dbReference>
<dbReference type="GO" id="GO:0007169">
    <property type="term" value="P:cell surface receptor protein tyrosine kinase signaling pathway"/>
    <property type="evidence" value="ECO:0000314"/>
    <property type="project" value="BHF-UCL"/>
</dbReference>
<dbReference type="GO" id="GO:0060956">
    <property type="term" value="P:endocardial cell differentiation"/>
    <property type="evidence" value="ECO:0000314"/>
    <property type="project" value="BHF-UCL"/>
</dbReference>
<dbReference type="GO" id="GO:0038127">
    <property type="term" value="P:ERBB signaling pathway"/>
    <property type="evidence" value="ECO:0000314"/>
    <property type="project" value="BHF-UCL"/>
</dbReference>
<dbReference type="GO" id="GO:0038133">
    <property type="term" value="P:ERBB2-ERBB3 signaling pathway"/>
    <property type="evidence" value="ECO:0000314"/>
    <property type="project" value="MGI"/>
</dbReference>
<dbReference type="GO" id="GO:0038135">
    <property type="term" value="P:ERBB2-ERBB4 signaling pathway"/>
    <property type="evidence" value="ECO:0000314"/>
    <property type="project" value="MGI"/>
</dbReference>
<dbReference type="GO" id="GO:0038129">
    <property type="term" value="P:ERBB3 signaling pathway"/>
    <property type="evidence" value="ECO:0000314"/>
    <property type="project" value="CAFA"/>
</dbReference>
<dbReference type="GO" id="GO:0038130">
    <property type="term" value="P:ERBB4 signaling pathway"/>
    <property type="evidence" value="ECO:0000314"/>
    <property type="project" value="UniProtKB"/>
</dbReference>
<dbReference type="GO" id="GO:0038138">
    <property type="term" value="P:ERBB4-ERBB4 signaling pathway"/>
    <property type="evidence" value="ECO:0000314"/>
    <property type="project" value="MGI"/>
</dbReference>
<dbReference type="GO" id="GO:0035556">
    <property type="term" value="P:intracellular signal transduction"/>
    <property type="evidence" value="ECO:0000318"/>
    <property type="project" value="GO_Central"/>
</dbReference>
<dbReference type="GO" id="GO:0030879">
    <property type="term" value="P:mammary gland development"/>
    <property type="evidence" value="ECO:0000304"/>
    <property type="project" value="BHF-UCL"/>
</dbReference>
<dbReference type="GO" id="GO:0010667">
    <property type="term" value="P:negative regulation of cardiac muscle cell apoptotic process"/>
    <property type="evidence" value="ECO:0000314"/>
    <property type="project" value="BHF-UCL"/>
</dbReference>
<dbReference type="GO" id="GO:0045892">
    <property type="term" value="P:negative regulation of DNA-templated transcription"/>
    <property type="evidence" value="ECO:0000314"/>
    <property type="project" value="MGI"/>
</dbReference>
<dbReference type="GO" id="GO:2001240">
    <property type="term" value="P:negative regulation of extrinsic apoptotic signaling pathway in absence of ligand"/>
    <property type="evidence" value="ECO:0000314"/>
    <property type="project" value="BHF-UCL"/>
</dbReference>
<dbReference type="GO" id="GO:0051048">
    <property type="term" value="P:negative regulation of secretion"/>
    <property type="evidence" value="ECO:0000314"/>
    <property type="project" value="BHF-UCL"/>
</dbReference>
<dbReference type="GO" id="GO:0007399">
    <property type="term" value="P:nervous system development"/>
    <property type="evidence" value="ECO:0000304"/>
    <property type="project" value="BHF-UCL"/>
</dbReference>
<dbReference type="GO" id="GO:0014032">
    <property type="term" value="P:neural crest cell development"/>
    <property type="evidence" value="ECO:0000304"/>
    <property type="project" value="BHF-UCL"/>
</dbReference>
<dbReference type="GO" id="GO:0007422">
    <property type="term" value="P:peripheral nervous system development"/>
    <property type="evidence" value="ECO:0000318"/>
    <property type="project" value="GO_Central"/>
</dbReference>
<dbReference type="GO" id="GO:0060045">
    <property type="term" value="P:positive regulation of cardiac muscle cell proliferation"/>
    <property type="evidence" value="ECO:0000314"/>
    <property type="project" value="BHF-UCL"/>
</dbReference>
<dbReference type="GO" id="GO:0045785">
    <property type="term" value="P:positive regulation of cell adhesion"/>
    <property type="evidence" value="ECO:0000314"/>
    <property type="project" value="BHF-UCL"/>
</dbReference>
<dbReference type="GO" id="GO:0030307">
    <property type="term" value="P:positive regulation of cell growth"/>
    <property type="evidence" value="ECO:0000314"/>
    <property type="project" value="BHF-UCL"/>
</dbReference>
<dbReference type="GO" id="GO:0008284">
    <property type="term" value="P:positive regulation of cell population proliferation"/>
    <property type="evidence" value="ECO:0000315"/>
    <property type="project" value="UniProtKB"/>
</dbReference>
<dbReference type="GO" id="GO:0070374">
    <property type="term" value="P:positive regulation of ERK1 and ERK2 cascade"/>
    <property type="evidence" value="ECO:0000315"/>
    <property type="project" value="UniProtKB"/>
</dbReference>
<dbReference type="GO" id="GO:1900086">
    <property type="term" value="P:positive regulation of peptidyl-tyrosine autophosphorylation"/>
    <property type="evidence" value="ECO:0000314"/>
    <property type="project" value="UniProtKB"/>
</dbReference>
<dbReference type="GO" id="GO:0031334">
    <property type="term" value="P:positive regulation of protein-containing complex assembly"/>
    <property type="evidence" value="ECO:0000314"/>
    <property type="project" value="BHF-UCL"/>
</dbReference>
<dbReference type="GO" id="GO:0051155">
    <property type="term" value="P:positive regulation of striated muscle cell differentiation"/>
    <property type="evidence" value="ECO:0000250"/>
    <property type="project" value="BHF-UCL"/>
</dbReference>
<dbReference type="GO" id="GO:0099149">
    <property type="term" value="P:regulation of postsynaptic neurotransmitter receptor internalization"/>
    <property type="evidence" value="ECO:0000314"/>
    <property type="project" value="SynGO"/>
</dbReference>
<dbReference type="GO" id="GO:0055012">
    <property type="term" value="P:ventricular cardiac muscle cell differentiation"/>
    <property type="evidence" value="ECO:0000314"/>
    <property type="project" value="BHF-UCL"/>
</dbReference>
<dbReference type="GO" id="GO:0003222">
    <property type="term" value="P:ventricular trabecula myocardium morphogenesis"/>
    <property type="evidence" value="ECO:0000314"/>
    <property type="project" value="BHF-UCL"/>
</dbReference>
<dbReference type="GO" id="GO:0042060">
    <property type="term" value="P:wound healing"/>
    <property type="evidence" value="ECO:0000314"/>
    <property type="project" value="BHF-UCL"/>
</dbReference>
<dbReference type="CDD" id="cd00054">
    <property type="entry name" value="EGF_CA"/>
    <property type="match status" value="1"/>
</dbReference>
<dbReference type="CDD" id="cd05895">
    <property type="entry name" value="Ig_Pro_neuregulin-1"/>
    <property type="match status" value="1"/>
</dbReference>
<dbReference type="DisProt" id="DP01520">
    <molecule id="Q02297-10"/>
</dbReference>
<dbReference type="FunFam" id="2.60.40.10:FF:000263">
    <property type="entry name" value="Pro-neuregulin-1, membrane-bound isoform"/>
    <property type="match status" value="1"/>
</dbReference>
<dbReference type="FunFam" id="2.10.25.10:FF:000073">
    <property type="entry name" value="Pro-neuregulin-1, membrane-bound isoform A"/>
    <property type="match status" value="1"/>
</dbReference>
<dbReference type="Gene3D" id="2.60.40.10">
    <property type="entry name" value="Immunoglobulins"/>
    <property type="match status" value="1"/>
</dbReference>
<dbReference type="Gene3D" id="2.10.25.10">
    <property type="entry name" value="Laminin"/>
    <property type="match status" value="1"/>
</dbReference>
<dbReference type="InterPro" id="IPR000742">
    <property type="entry name" value="EGF-like_dom"/>
</dbReference>
<dbReference type="InterPro" id="IPR007110">
    <property type="entry name" value="Ig-like_dom"/>
</dbReference>
<dbReference type="InterPro" id="IPR036179">
    <property type="entry name" value="Ig-like_dom_sf"/>
</dbReference>
<dbReference type="InterPro" id="IPR013783">
    <property type="entry name" value="Ig-like_fold"/>
</dbReference>
<dbReference type="InterPro" id="IPR013098">
    <property type="entry name" value="Ig_I-set"/>
</dbReference>
<dbReference type="InterPro" id="IPR003599">
    <property type="entry name" value="Ig_sub"/>
</dbReference>
<dbReference type="InterPro" id="IPR003598">
    <property type="entry name" value="Ig_sub2"/>
</dbReference>
<dbReference type="InterPro" id="IPR040180">
    <property type="entry name" value="Neuregulin"/>
</dbReference>
<dbReference type="InterPro" id="IPR002154">
    <property type="entry name" value="Neuregulin_C"/>
</dbReference>
<dbReference type="InterPro" id="IPR018250">
    <property type="entry name" value="NRG1"/>
</dbReference>
<dbReference type="PANTHER" id="PTHR11100">
    <property type="entry name" value="HEREGULIN-NEUREGULIN FAMILY MEMBER"/>
    <property type="match status" value="1"/>
</dbReference>
<dbReference type="PANTHER" id="PTHR11100:SF7">
    <property type="entry name" value="PRO-NEUREGULIN-1, MEMBRANE-BOUND ISOFORM"/>
    <property type="match status" value="1"/>
</dbReference>
<dbReference type="Pfam" id="PF00008">
    <property type="entry name" value="EGF"/>
    <property type="match status" value="1"/>
</dbReference>
<dbReference type="Pfam" id="PF07679">
    <property type="entry name" value="I-set"/>
    <property type="match status" value="1"/>
</dbReference>
<dbReference type="Pfam" id="PF02158">
    <property type="entry name" value="Neuregulin"/>
    <property type="match status" value="1"/>
</dbReference>
<dbReference type="PRINTS" id="PR01089">
    <property type="entry name" value="NEUREGULIN"/>
</dbReference>
<dbReference type="SMART" id="SM00181">
    <property type="entry name" value="EGF"/>
    <property type="match status" value="1"/>
</dbReference>
<dbReference type="SMART" id="SM00409">
    <property type="entry name" value="IG"/>
    <property type="match status" value="1"/>
</dbReference>
<dbReference type="SMART" id="SM00408">
    <property type="entry name" value="IGc2"/>
    <property type="match status" value="1"/>
</dbReference>
<dbReference type="SUPFAM" id="SSF57196">
    <property type="entry name" value="EGF/Laminin"/>
    <property type="match status" value="1"/>
</dbReference>
<dbReference type="SUPFAM" id="SSF48726">
    <property type="entry name" value="Immunoglobulin"/>
    <property type="match status" value="1"/>
</dbReference>
<dbReference type="PROSITE" id="PS00022">
    <property type="entry name" value="EGF_1"/>
    <property type="match status" value="1"/>
</dbReference>
<dbReference type="PROSITE" id="PS01186">
    <property type="entry name" value="EGF_2"/>
    <property type="match status" value="1"/>
</dbReference>
<dbReference type="PROSITE" id="PS50026">
    <property type="entry name" value="EGF_3"/>
    <property type="match status" value="1"/>
</dbReference>
<dbReference type="PROSITE" id="PS50835">
    <property type="entry name" value="IG_LIKE"/>
    <property type="match status" value="1"/>
</dbReference>
<keyword id="KW-0002">3D-structure</keyword>
<keyword id="KW-0025">Alternative splicing</keyword>
<keyword id="KW-1003">Cell membrane</keyword>
<keyword id="KW-0160">Chromosomal rearrangement</keyword>
<keyword id="KW-0903">Direct protein sequencing</keyword>
<keyword id="KW-1015">Disulfide bond</keyword>
<keyword id="KW-0245">EGF-like domain</keyword>
<keyword id="KW-0325">Glycoprotein</keyword>
<keyword id="KW-0339">Growth factor</keyword>
<keyword id="KW-0393">Immunoglobulin domain</keyword>
<keyword id="KW-0472">Membrane</keyword>
<keyword id="KW-0539">Nucleus</keyword>
<keyword id="KW-1267">Proteomics identification</keyword>
<keyword id="KW-1185">Reference proteome</keyword>
<keyword id="KW-0964">Secreted</keyword>
<keyword id="KW-0812">Transmembrane</keyword>
<keyword id="KW-1133">Transmembrane helix</keyword>
<accession>Q02297</accession>
<accession>A5YAK4</accession>
<accession>A5YAK5</accession>
<accession>A8K1L2</accession>
<accession>B7Z4Z3</accession>
<accession>E9PHH4</accession>
<accession>O14667</accession>
<accession>P98202</accession>
<accession>Q02298</accession>
<accession>Q02299</accession>
<accession>Q07110</accession>
<accession>Q07111</accession>
<accession>Q12779</accession>
<accession>Q12780</accession>
<accession>Q12781</accession>
<accession>Q12782</accession>
<accession>Q12783</accession>
<accession>Q12784</accession>
<accession>Q15491</accession>
<accession>Q7RTV9</accession>
<accession>Q7RTW0</accession>
<accession>Q7RTW1</accession>
<accession>Q7RTW2</accession>
<accession>Q8NFN1</accession>
<accession>Q8NFN2</accession>
<accession>Q8NFN3</accession>
<accession>Q9UPE3</accession>
<name>NRG1_HUMAN</name>
<evidence type="ECO:0000250" key="1"/>
<evidence type="ECO:0000250" key="2">
    <source>
        <dbReference type="UniProtKB" id="P43322"/>
    </source>
</evidence>
<evidence type="ECO:0000250" key="3">
    <source>
        <dbReference type="UniProtKB" id="Q6DR98"/>
    </source>
</evidence>
<evidence type="ECO:0000255" key="4"/>
<evidence type="ECO:0000255" key="5">
    <source>
        <dbReference type="PROSITE-ProRule" id="PRU00076"/>
    </source>
</evidence>
<evidence type="ECO:0000256" key="6">
    <source>
        <dbReference type="SAM" id="MobiDB-lite"/>
    </source>
</evidence>
<evidence type="ECO:0000269" key="7">
    <source>
    </source>
</evidence>
<evidence type="ECO:0000269" key="8">
    <source>
    </source>
</evidence>
<evidence type="ECO:0000269" key="9">
    <source>
    </source>
</evidence>
<evidence type="ECO:0000269" key="10">
    <source>
    </source>
</evidence>
<evidence type="ECO:0000269" key="11">
    <source>
    </source>
</evidence>
<evidence type="ECO:0000269" key="12">
    <source>
    </source>
</evidence>
<evidence type="ECO:0000269" key="13">
    <source>
    </source>
</evidence>
<evidence type="ECO:0000269" key="14">
    <source>
    </source>
</evidence>
<evidence type="ECO:0000303" key="15">
    <source>
    </source>
</evidence>
<evidence type="ECO:0000303" key="16">
    <source>
    </source>
</evidence>
<evidence type="ECO:0000303" key="17">
    <source>
    </source>
</evidence>
<evidence type="ECO:0000303" key="18">
    <source>
    </source>
</evidence>
<evidence type="ECO:0000303" key="19">
    <source>
    </source>
</evidence>
<evidence type="ECO:0000303" key="20">
    <source>
    </source>
</evidence>
<evidence type="ECO:0000303" key="21">
    <source>
    </source>
</evidence>
<evidence type="ECO:0000305" key="22"/>
<evidence type="ECO:0007829" key="23">
    <source>
        <dbReference type="PDB" id="1HAF"/>
    </source>
</evidence>
<evidence type="ECO:0007829" key="24">
    <source>
        <dbReference type="PDB" id="1HRE"/>
    </source>
</evidence>
<evidence type="ECO:0007829" key="25">
    <source>
        <dbReference type="PDB" id="7MN5"/>
    </source>
</evidence>
<evidence type="ECO:0007829" key="26">
    <source>
        <dbReference type="PDB" id="7SJL"/>
    </source>
</evidence>
<organism>
    <name type="scientific">Homo sapiens</name>
    <name type="common">Human</name>
    <dbReference type="NCBI Taxonomy" id="9606"/>
    <lineage>
        <taxon>Eukaryota</taxon>
        <taxon>Metazoa</taxon>
        <taxon>Chordata</taxon>
        <taxon>Craniata</taxon>
        <taxon>Vertebrata</taxon>
        <taxon>Euteleostomi</taxon>
        <taxon>Mammalia</taxon>
        <taxon>Eutheria</taxon>
        <taxon>Euarchontoglires</taxon>
        <taxon>Primates</taxon>
        <taxon>Haplorrhini</taxon>
        <taxon>Catarrhini</taxon>
        <taxon>Hominidae</taxon>
        <taxon>Homo</taxon>
    </lineage>
</organism>
<proteinExistence type="evidence at protein level"/>
<feature type="propeptide" id="PRO_0000019462" evidence="12">
    <location>
        <begin position="1"/>
        <end position="19"/>
    </location>
</feature>
<feature type="chain" id="PRO_0000019463" description="Pro-neuregulin-1, membrane-bound isoform">
    <location>
        <begin position="20"/>
        <end position="640"/>
    </location>
</feature>
<feature type="chain" id="PRO_0000019464" description="Neuregulin-1">
    <location>
        <begin position="20"/>
        <end position="241"/>
    </location>
</feature>
<feature type="topological domain" description="Extracellular" evidence="4">
    <location>
        <begin position="20"/>
        <end position="242"/>
    </location>
</feature>
<feature type="transmembrane region" description="Helical; Note=Internal signal sequence" evidence="4">
    <location>
        <begin position="243"/>
        <end position="265"/>
    </location>
</feature>
<feature type="topological domain" description="Cytoplasmic" evidence="4">
    <location>
        <begin position="266"/>
        <end position="640"/>
    </location>
</feature>
<feature type="domain" description="Ig-like C2-type">
    <location>
        <begin position="37"/>
        <end position="128"/>
    </location>
</feature>
<feature type="domain" description="EGF-like" evidence="5">
    <location>
        <begin position="178"/>
        <end position="222"/>
    </location>
</feature>
<feature type="region of interest" description="Disordered" evidence="6">
    <location>
        <begin position="1"/>
        <end position="53"/>
    </location>
</feature>
<feature type="region of interest" description="Disordered" evidence="6">
    <location>
        <begin position="334"/>
        <end position="360"/>
    </location>
</feature>
<feature type="region of interest" description="Disordered" evidence="6">
    <location>
        <begin position="375"/>
        <end position="399"/>
    </location>
</feature>
<feature type="region of interest" description="Disordered" evidence="6">
    <location>
        <begin position="433"/>
        <end position="461"/>
    </location>
</feature>
<feature type="region of interest" description="Disordered" evidence="6">
    <location>
        <begin position="524"/>
        <end position="588"/>
    </location>
</feature>
<feature type="compositionally biased region" description="Low complexity" evidence="6">
    <location>
        <begin position="334"/>
        <end position="350"/>
    </location>
</feature>
<feature type="compositionally biased region" description="Polar residues" evidence="6">
    <location>
        <begin position="351"/>
        <end position="360"/>
    </location>
</feature>
<feature type="compositionally biased region" description="Gly residues" evidence="6">
    <location>
        <begin position="387"/>
        <end position="397"/>
    </location>
</feature>
<feature type="compositionally biased region" description="Basic residues" evidence="6">
    <location>
        <begin position="542"/>
        <end position="552"/>
    </location>
</feature>
<feature type="compositionally biased region" description="Low complexity" evidence="6">
    <location>
        <begin position="563"/>
        <end position="574"/>
    </location>
</feature>
<feature type="site" description="Breakpoint for translocation to form gamma-heregulin">
    <location>
        <position position="34"/>
    </location>
</feature>
<feature type="glycosylation site" description="N-linked (GlcNAc...) asparagine" evidence="4">
    <location>
        <position position="120"/>
    </location>
</feature>
<feature type="glycosylation site" description="N-linked (GlcNAc...) asparagine" evidence="4">
    <location>
        <position position="126"/>
    </location>
</feature>
<feature type="glycosylation site" description="N-linked (GlcNAc...) asparagine" evidence="4">
    <location>
        <position position="164"/>
    </location>
</feature>
<feature type="disulfide bond" evidence="1">
    <location>
        <begin position="57"/>
        <end position="112"/>
    </location>
</feature>
<feature type="disulfide bond" evidence="14">
    <location>
        <begin position="182"/>
        <end position="196"/>
    </location>
</feature>
<feature type="disulfide bond" evidence="14">
    <location>
        <begin position="190"/>
        <end position="210"/>
    </location>
</feature>
<feature type="disulfide bond" evidence="14">
    <location>
        <begin position="212"/>
        <end position="221"/>
    </location>
</feature>
<feature type="splice variant" id="VSP_037562" description="In isoform 10." evidence="16 17 20">
    <location>
        <begin position="1"/>
        <end position="166"/>
    </location>
</feature>
<feature type="splice variant" id="VSP_003425" description="In isoform 9." evidence="21">
    <original>MSERKEGRGKGKGKKKERGSGKKPESAAGSQSP</original>
    <variation>MRWRRAPRRSGRPGPRAQRPGSAARSSPPLPLLPLLLLLGTAALAPGAAAGNEAAPAGASVCYSSPPSVGSVQELAQRAAVVIEGKVHPQRRQQGALDRKAAAAAGEAGAWGGDREPPAAGPRALGPPAEEPLLAANGTVPSWPTAPVPSAGEPGEEAPYLVKVHQVWAVKAGGLKKDSLLTVRLGTWGHPAFPSCGRLKEDSRYIFFMEPDANSTSRAPAAFRASFPPLETGRNLKKEVSRVLCKRC</variation>
    <location>
        <begin position="1"/>
        <end position="33"/>
    </location>
</feature>
<feature type="splice variant" id="VSP_037563" description="In isoform 11." evidence="18">
    <location>
        <begin position="1"/>
        <end position="21"/>
    </location>
</feature>
<feature type="splice variant" id="VSP_037564" description="In isoform 11." evidence="18">
    <original>KKPESAAGSQSP</original>
    <variation>MGKGRAGRVGTT</variation>
    <location>
        <begin position="22"/>
        <end position="33"/>
    </location>
</feature>
<feature type="splice variant" id="VSP_003426" description="In isoform 9 and isoform 11." evidence="18 21">
    <original>EIITGMPASTEGAYVSSESPIRISVSTEGANTSSS</original>
    <variation>A</variation>
    <location>
        <begin position="134"/>
        <end position="168"/>
    </location>
</feature>
<feature type="splice variant" id="VSP_037565" description="In isoform 10." evidence="16 17 20">
    <original>S</original>
    <variation>MEIYSPDMSEVAAERSSSPSTQLSADPSLDGLPAAEDMPEPQTEDGRTPGLVGLAVPCCACLEAERLRGCLNSEKICIVPILACLVSLCLCIAGLKWVFVDKIFEYDSPTHLDPGGLGQDPIISLDATAASAVWVSSEAYTSPVSRAQSESEVQVTVQGDKAVVSFEPSAAPTPKNRIFAFSFLPSTAPSFPSPTRNPEVRTPKSATQPQTTETNLQTAPKL</variation>
    <location>
        <position position="167"/>
    </location>
</feature>
<feature type="splice variant" id="VSP_003429" description="In isoform 8, isoform 9 and isoform 10." evidence="15 16 17 19 20 21">
    <original>QPGFTGARCTENVPMKVQNQEKAEELYQK</original>
    <variation>PNEFTGDRCQNYVMASFYSTSTPFLSLPE</variation>
    <location>
        <begin position="213"/>
        <end position="241"/>
    </location>
</feature>
<feature type="splice variant" id="VSP_003428" description="In isoform 6 and isoform 11." evidence="15 18 19">
    <original>QPGFTGARCTENVPMKVQNQEK</original>
    <variation>PNEFTGDRCQNYVMASFYKHLGIEFME</variation>
    <location>
        <begin position="213"/>
        <end position="234"/>
    </location>
</feature>
<feature type="splice variant" id="VSP_003427" description="In isoform 7 and isoform 12." evidence="15 16 19">
    <original>QPGFTGARCTENVPMKVQNQE</original>
    <variation>PNEFTGDRCQNYVMASFY</variation>
    <location>
        <begin position="213"/>
        <end position="233"/>
    </location>
</feature>
<feature type="splice variant" id="VSP_003432" description="In isoform 4." evidence="19">
    <original>KAEELYQKRVLTIT</original>
    <variation>SAQMSLLVIAAKTT</variation>
    <location>
        <begin position="234"/>
        <end position="247"/>
    </location>
</feature>
<feature type="splice variant" id="VSP_003431" description="In isoform 2." evidence="19">
    <original>K</original>
    <variation>KHLGIEFIE</variation>
    <location>
        <position position="234"/>
    </location>
</feature>
<feature type="splice variant" id="VSP_003430" description="In isoform 8, isoform 9 and isoform 10." evidence="15 16 17 19 20 21">
    <location>
        <begin position="242"/>
        <end position="640"/>
    </location>
</feature>
<feature type="splice variant" id="VSP_003433" description="In isoform 4." evidence="19">
    <location>
        <begin position="248"/>
        <end position="640"/>
    </location>
</feature>
<feature type="splice variant" id="VSP_046417" description="In isoform 12." evidence="16">
    <location>
        <begin position="424"/>
        <end position="640"/>
    </location>
</feature>
<feature type="splice variant" id="VSP_003434" description="In isoform 3." evidence="19">
    <original>YVSAMTTPARMSPVDFHTPSSPKSPPSEMSPPVSSMTVS</original>
    <variation>HNLIAELRRNKAHRSKCMQIQLSATHLRSSSIPHLGFIL</variation>
    <location>
        <begin position="424"/>
        <end position="462"/>
    </location>
</feature>
<feature type="splice variant" id="VSP_003435" description="In isoform 3." evidence="19">
    <location>
        <begin position="463"/>
        <end position="640"/>
    </location>
</feature>
<feature type="sequence variant" id="VAR_009307" description="In dbSNP:rs3924999." evidence="10">
    <original>R</original>
    <variation>Q</variation>
    <location>
        <position position="38"/>
    </location>
</feature>
<feature type="sequence variant" id="VAR_053531" description="In dbSNP:rs10503929." evidence="9 10">
    <original>M</original>
    <variation>T</variation>
    <location>
        <position position="289"/>
    </location>
</feature>
<feature type="sequence variant" id="VAR_009308">
    <original>M</original>
    <variation>K</variation>
    <location>
        <position position="463"/>
    </location>
</feature>
<feature type="mutagenesis site" description="Defective in integrin-binding and in inducing ERBB3 phosphorylation; when associated with or without E-185 or E-187. No effect on ERBB3-binding, defective in integrin-binding and in ternary complex formation with ERBB3 and integrins, and defective in inducing NRG1-ERBB signaling; when associated with E-185 and E-187." evidence="11">
    <original>K</original>
    <variation>E</variation>
    <location>
        <position position="181"/>
    </location>
</feature>
<feature type="mutagenesis site" description="Defective in integrin-binding and in inducing ERBB3 phosphorylation; when associated with or without E-181 or E-187. No effect on ERBB3-binding, defective in integrin-binding and in ternary complex formation with ERBB3 and integrins, and defective in inducing NRG1-ERBB signaling; when associated with E-181 and E-187." evidence="11">
    <original>K</original>
    <variation>E</variation>
    <location>
        <position position="185"/>
    </location>
</feature>
<feature type="mutagenesis site" description="Defective in integrin-binding and in inducing ERBB3 phosphorylation; when associated with or without E-181 or E-185. No effect on ERBB3-binding, defective in integrin-binding and in ternary complex formation with ERBB3 and integrins, and defective in inducing NRG1-ERBB signaling; when associated with E-181 and E-185." evidence="11">
    <original>K</original>
    <variation>E</variation>
    <location>
        <position position="187"/>
    </location>
</feature>
<feature type="sequence conflict" description="In Ref. 2; AAA19953." evidence="22" ref="2">
    <original>K</original>
    <variation>A</variation>
    <location>
        <position position="94"/>
    </location>
</feature>
<feature type="sequence conflict" description="In Ref. 10; ABQ53539." evidence="22" ref="10">
    <original>S</original>
    <variation>P</variation>
    <location>
        <position position="107"/>
    </location>
</feature>
<feature type="sequence conflict" description="In Ref. 10; ABQ53540." evidence="22" ref="10">
    <original>V</original>
    <variation>L</variation>
    <location>
        <position position="261"/>
    </location>
</feature>
<feature type="sequence conflict" description="In Ref. 2; AAA19953." evidence="22" ref="2">
    <original>S</original>
    <variation>F</variation>
    <location>
        <position position="414"/>
    </location>
</feature>
<feature type="sequence conflict" description="In Ref. 2; AAA19951." evidence="22" ref="2">
    <original>Q</original>
    <variation>R</variation>
    <location>
        <position position="535"/>
    </location>
</feature>
<feature type="strand" evidence="26">
    <location>
        <begin position="45"/>
        <end position="48"/>
    </location>
</feature>
<feature type="strand" evidence="26">
    <location>
        <begin position="51"/>
        <end position="61"/>
    </location>
</feature>
<feature type="strand" evidence="26">
    <location>
        <begin position="67"/>
        <end position="72"/>
    </location>
</feature>
<feature type="turn" evidence="26">
    <location>
        <begin position="79"/>
        <end position="81"/>
    </location>
</feature>
<feature type="strand" evidence="26">
    <location>
        <begin position="86"/>
        <end position="91"/>
    </location>
</feature>
<feature type="strand" evidence="26">
    <location>
        <begin position="94"/>
        <end position="102"/>
    </location>
</feature>
<feature type="helix" evidence="26">
    <location>
        <begin position="104"/>
        <end position="106"/>
    </location>
</feature>
<feature type="strand" evidence="26">
    <location>
        <begin position="108"/>
        <end position="115"/>
    </location>
</feature>
<feature type="strand" evidence="26">
    <location>
        <begin position="120"/>
        <end position="130"/>
    </location>
</feature>
<feature type="strand" evidence="25">
    <location>
        <begin position="179"/>
        <end position="181"/>
    </location>
</feature>
<feature type="turn" evidence="25">
    <location>
        <begin position="184"/>
        <end position="186"/>
    </location>
</feature>
<feature type="helix" evidence="25">
    <location>
        <begin position="187"/>
        <end position="189"/>
    </location>
</feature>
<feature type="strand" evidence="24">
    <location>
        <begin position="190"/>
        <end position="193"/>
    </location>
</feature>
<feature type="strand" evidence="25">
    <location>
        <begin position="196"/>
        <end position="199"/>
    </location>
</feature>
<feature type="strand" evidence="24">
    <location>
        <begin position="200"/>
        <end position="204"/>
    </location>
</feature>
<feature type="strand" evidence="25">
    <location>
        <begin position="208"/>
        <end position="212"/>
    </location>
</feature>
<feature type="strand" evidence="25">
    <location>
        <begin position="216"/>
        <end position="218"/>
    </location>
</feature>
<feature type="strand" evidence="23">
    <location>
        <begin position="233"/>
        <end position="235"/>
    </location>
</feature>
<feature type="sequence variant" id="VAR_082866" description="In dbSNP:rs3735774." evidence="22">
    <original>G</original>
    <variation>R</variation>
    <location sequence="Q02297-10">
        <position position="46"/>
    </location>
</feature>
<feature type="sequence variant" id="VAR_082867" description="In dbSNP:rs34822181." evidence="22">
    <original>A</original>
    <variation>P</variation>
    <location sequence="Q02297-10">
        <position position="127"/>
    </location>
</feature>